<keyword id="KW-0002">3D-structure</keyword>
<keyword id="KW-0007">Acetylation</keyword>
<keyword id="KW-0025">Alternative splicing</keyword>
<keyword id="KW-0053">Apoptosis</keyword>
<keyword id="KW-0122">Cardiomyopathy</keyword>
<keyword id="KW-0175">Coiled coil</keyword>
<keyword id="KW-0209">Deafness</keyword>
<keyword id="KW-0225">Disease variant</keyword>
<keyword id="KW-1015">Disulfide bond</keyword>
<keyword id="KW-0342">GTP-binding</keyword>
<keyword id="KW-0378">Hydrolase</keyword>
<keyword id="KW-0446">Lipid-binding</keyword>
<keyword id="KW-0472">Membrane</keyword>
<keyword id="KW-0496">Mitochondrion</keyword>
<keyword id="KW-0999">Mitochondrion inner membrane</keyword>
<keyword id="KW-0523">Neurodegeneration</keyword>
<keyword id="KW-0547">Nucleotide-binding</keyword>
<keyword id="KW-1274">Primary mitochondrial disease</keyword>
<keyword id="KW-1267">Proteomics identification</keyword>
<keyword id="KW-1185">Reference proteome</keyword>
<keyword id="KW-0716">Sensory transduction</keyword>
<keyword id="KW-0809">Transit peptide</keyword>
<keyword id="KW-0812">Transmembrane</keyword>
<keyword id="KW-1133">Transmembrane helix</keyword>
<keyword id="KW-0844">Vision</keyword>
<sequence>MWRLRRAAVACEVCQSLVKHSSGIKGSLPLQKLHLVSRSIYHSHHPTLKLQRPQLRTSFQQFSSLTNLPLRKLKFSPIKYGYQPRRNFWPARLATRLLKLRYLILGSAVGGGYTAKKTFDQWKDMIPDLSEYKWIVPDIVWEIDEYIDFEKIRKALPSSEDLVKLAPDFDKIVESLSLLKDFFTSGSPEETAFRATDRGSESDKHFRKVSDKEKIDQLQEELLHTQLKYQRILERLEKENKELRKLVLQKDDKGIHHRKLKKSLIDMYSEVLDVLSDYDASYNTQDHLPRVVVVGDQSAGKTSVLEMIAQARIFPRGSGEMMTRSPVKVTLSEGPHHVALFKDSSREFDLTKEEDLAALRHEIELRMRKNVKEGCTVSPETISLNVKGPGLQRMVLVDLPGVINTVTSGMAPDTKETIFSISKAYMQNPNAIILCIQDGSVDAERSIVTDLVSQMDPHGRRTIFVLTKVDLAEKNVASPSRIQQIIEGKLFPMKALGYFAVVTGKGNSSESIEAIREYEEEFFQNSKLLKTSMLKAHQVTTRNLSLAVSDCFWKMVRESVEQQADSFKATRFNLETEWKNNYPRLRELDRNELFEKAKNEILDEVISLSQVTPKHWEEILQQSLWERVSTHVIENIYLPAAQTMNSGTFNTTVDIKLKQWTDKQLPNKAVEVAWETLQEEFSRFMTEPKGKEHDDIFDKLKEAVKEESIKRHKWNDFAEDSLRVIQHNALEDRSISDKQQWDAAIYFMEEALQARLKDTENAIENMVGPDWKKRWLYWKNRTQEQCVHNETKNELEKMLKCNEEHPAYLASDEITTVRKNLESRGVEVDPSLIKDTWHQVYRRHFLKTALNHCNLCRRGFYYYQRHFVDSELECNDVVLFWRIQRMLAITANTLRQQLTNTEVRRLEKNVKEVLEDFAEDGEKKIKLLTGKRVQLAEDLKKVREIQEKLDAFIEALHQEK</sequence>
<dbReference type="EC" id="3.6.5.5" evidence="32 47 48 50 52 56 57"/>
<dbReference type="EMBL" id="AB011139">
    <property type="protein sequence ID" value="BAA25493.1"/>
    <property type="molecule type" value="mRNA"/>
</dbReference>
<dbReference type="EMBL" id="HQ204906">
    <property type="protein sequence ID" value="ADP90054.1"/>
    <property type="molecule type" value="Genomic_DNA"/>
</dbReference>
<dbReference type="EMBL" id="HQ204906">
    <property type="protein sequence ID" value="ADP90055.1"/>
    <property type="molecule type" value="Genomic_DNA"/>
</dbReference>
<dbReference type="EMBL" id="HQ204906">
    <property type="protein sequence ID" value="ADP90056.1"/>
    <property type="molecule type" value="Genomic_DNA"/>
</dbReference>
<dbReference type="EMBL" id="HQ204906">
    <property type="protein sequence ID" value="ADP90057.1"/>
    <property type="molecule type" value="Genomic_DNA"/>
</dbReference>
<dbReference type="EMBL" id="HQ204906">
    <property type="protein sequence ID" value="ADP90060.1"/>
    <property type="molecule type" value="Genomic_DNA"/>
</dbReference>
<dbReference type="EMBL" id="HQ204906">
    <property type="protein sequence ID" value="ADP90061.1"/>
    <property type="molecule type" value="Genomic_DNA"/>
</dbReference>
<dbReference type="EMBL" id="HQ204907">
    <property type="protein sequence ID" value="ADP90062.1"/>
    <property type="molecule type" value="Genomic_DNA"/>
</dbReference>
<dbReference type="EMBL" id="HQ204907">
    <property type="protein sequence ID" value="ADP90063.1"/>
    <property type="molecule type" value="Genomic_DNA"/>
</dbReference>
<dbReference type="EMBL" id="HQ204907">
    <property type="protein sequence ID" value="ADP90064.1"/>
    <property type="molecule type" value="Genomic_DNA"/>
</dbReference>
<dbReference type="EMBL" id="HQ204907">
    <property type="protein sequence ID" value="ADP90065.1"/>
    <property type="molecule type" value="Genomic_DNA"/>
</dbReference>
<dbReference type="EMBL" id="HQ204907">
    <property type="protein sequence ID" value="ADP90068.1"/>
    <property type="molecule type" value="Genomic_DNA"/>
</dbReference>
<dbReference type="EMBL" id="HQ204907">
    <property type="protein sequence ID" value="ADP90069.1"/>
    <property type="molecule type" value="Genomic_DNA"/>
</dbReference>
<dbReference type="EMBL" id="HQ204908">
    <property type="protein sequence ID" value="ADP90070.1"/>
    <property type="molecule type" value="Genomic_DNA"/>
</dbReference>
<dbReference type="EMBL" id="HQ204908">
    <property type="protein sequence ID" value="ADP90071.1"/>
    <property type="molecule type" value="Genomic_DNA"/>
</dbReference>
<dbReference type="EMBL" id="HQ204908">
    <property type="protein sequence ID" value="ADP90072.1"/>
    <property type="molecule type" value="Genomic_DNA"/>
</dbReference>
<dbReference type="EMBL" id="HQ204908">
    <property type="protein sequence ID" value="ADP90073.1"/>
    <property type="molecule type" value="Genomic_DNA"/>
</dbReference>
<dbReference type="EMBL" id="HQ204908">
    <property type="protein sequence ID" value="ADP90076.1"/>
    <property type="molecule type" value="Genomic_DNA"/>
</dbReference>
<dbReference type="EMBL" id="HQ204908">
    <property type="protein sequence ID" value="ADP90077.1"/>
    <property type="molecule type" value="Genomic_DNA"/>
</dbReference>
<dbReference type="EMBL" id="HQ204909">
    <property type="protein sequence ID" value="ADP90084.1"/>
    <property type="molecule type" value="Genomic_DNA"/>
</dbReference>
<dbReference type="EMBL" id="HQ204909">
    <property type="protein sequence ID" value="ADP90085.1"/>
    <property type="molecule type" value="Genomic_DNA"/>
</dbReference>
<dbReference type="EMBL" id="HQ204910">
    <property type="protein sequence ID" value="ADP90086.1"/>
    <property type="molecule type" value="Genomic_DNA"/>
</dbReference>
<dbReference type="EMBL" id="HQ204910">
    <property type="protein sequence ID" value="ADP90087.1"/>
    <property type="molecule type" value="Genomic_DNA"/>
</dbReference>
<dbReference type="EMBL" id="HQ204910">
    <property type="protein sequence ID" value="ADP90088.1"/>
    <property type="molecule type" value="Genomic_DNA"/>
</dbReference>
<dbReference type="EMBL" id="HQ204910">
    <property type="protein sequence ID" value="ADP90089.1"/>
    <property type="molecule type" value="Genomic_DNA"/>
</dbReference>
<dbReference type="EMBL" id="HQ204910">
    <property type="protein sequence ID" value="ADP90092.1"/>
    <property type="molecule type" value="Genomic_DNA"/>
</dbReference>
<dbReference type="EMBL" id="HQ204910">
    <property type="protein sequence ID" value="ADP90093.1"/>
    <property type="molecule type" value="Genomic_DNA"/>
</dbReference>
<dbReference type="EMBL" id="HQ204911">
    <property type="protein sequence ID" value="ADP90094.1"/>
    <property type="molecule type" value="Genomic_DNA"/>
</dbReference>
<dbReference type="EMBL" id="HQ204911">
    <property type="protein sequence ID" value="ADP90095.1"/>
    <property type="molecule type" value="Genomic_DNA"/>
</dbReference>
<dbReference type="EMBL" id="HQ204911">
    <property type="protein sequence ID" value="ADP90096.1"/>
    <property type="molecule type" value="Genomic_DNA"/>
</dbReference>
<dbReference type="EMBL" id="HQ204911">
    <property type="protein sequence ID" value="ADP90097.1"/>
    <property type="molecule type" value="Genomic_DNA"/>
</dbReference>
<dbReference type="EMBL" id="HQ204911">
    <property type="protein sequence ID" value="ADP90100.1"/>
    <property type="molecule type" value="Genomic_DNA"/>
</dbReference>
<dbReference type="EMBL" id="HQ204911">
    <property type="protein sequence ID" value="ADP90101.1"/>
    <property type="molecule type" value="Genomic_DNA"/>
</dbReference>
<dbReference type="EMBL" id="HQ204912">
    <property type="protein sequence ID" value="ADP90102.1"/>
    <property type="molecule type" value="Genomic_DNA"/>
</dbReference>
<dbReference type="EMBL" id="HQ204912">
    <property type="protein sequence ID" value="ADP90103.1"/>
    <property type="molecule type" value="Genomic_DNA"/>
</dbReference>
<dbReference type="EMBL" id="HQ204912">
    <property type="protein sequence ID" value="ADP90104.1"/>
    <property type="molecule type" value="Genomic_DNA"/>
</dbReference>
<dbReference type="EMBL" id="HQ204912">
    <property type="protein sequence ID" value="ADP90105.1"/>
    <property type="molecule type" value="Genomic_DNA"/>
</dbReference>
<dbReference type="EMBL" id="HQ204912">
    <property type="protein sequence ID" value="ADP90108.1"/>
    <property type="molecule type" value="Genomic_DNA"/>
</dbReference>
<dbReference type="EMBL" id="HQ204912">
    <property type="protein sequence ID" value="ADP90109.1"/>
    <property type="molecule type" value="Genomic_DNA"/>
</dbReference>
<dbReference type="EMBL" id="HQ204913">
    <property type="protein sequence ID" value="ADP90110.1"/>
    <property type="molecule type" value="Genomic_DNA"/>
</dbReference>
<dbReference type="EMBL" id="HQ204913">
    <property type="protein sequence ID" value="ADP90111.1"/>
    <property type="molecule type" value="Genomic_DNA"/>
</dbReference>
<dbReference type="EMBL" id="HQ204913">
    <property type="protein sequence ID" value="ADP90112.1"/>
    <property type="molecule type" value="Genomic_DNA"/>
</dbReference>
<dbReference type="EMBL" id="HQ204913">
    <property type="protein sequence ID" value="ADP90113.1"/>
    <property type="molecule type" value="Genomic_DNA"/>
</dbReference>
<dbReference type="EMBL" id="HQ204913">
    <property type="protein sequence ID" value="ADP90116.1"/>
    <property type="molecule type" value="Genomic_DNA"/>
</dbReference>
<dbReference type="EMBL" id="HQ204914">
    <property type="protein sequence ID" value="ADP90118.1"/>
    <property type="molecule type" value="Genomic_DNA"/>
</dbReference>
<dbReference type="EMBL" id="HQ204913">
    <property type="protein sequence ID" value="ADP90117.1"/>
    <property type="molecule type" value="Genomic_DNA"/>
</dbReference>
<dbReference type="EMBL" id="HQ204914">
    <property type="protein sequence ID" value="ADP90119.1"/>
    <property type="molecule type" value="Genomic_DNA"/>
</dbReference>
<dbReference type="EMBL" id="HQ204914">
    <property type="protein sequence ID" value="ADP90120.1"/>
    <property type="molecule type" value="Genomic_DNA"/>
</dbReference>
<dbReference type="EMBL" id="HQ204914">
    <property type="protein sequence ID" value="ADP90121.1"/>
    <property type="molecule type" value="Genomic_DNA"/>
</dbReference>
<dbReference type="EMBL" id="HQ204914">
    <property type="protein sequence ID" value="ADP90124.1"/>
    <property type="molecule type" value="Genomic_DNA"/>
</dbReference>
<dbReference type="EMBL" id="HQ204914">
    <property type="protein sequence ID" value="ADP90125.1"/>
    <property type="molecule type" value="Genomic_DNA"/>
</dbReference>
<dbReference type="EMBL" id="HQ204915">
    <property type="protein sequence ID" value="ADP90132.1"/>
    <property type="molecule type" value="Genomic_DNA"/>
</dbReference>
<dbReference type="EMBL" id="HQ204915">
    <property type="protein sequence ID" value="ADP90133.1"/>
    <property type="molecule type" value="Genomic_DNA"/>
</dbReference>
<dbReference type="EMBL" id="HQ204916">
    <property type="protein sequence ID" value="ADP90140.1"/>
    <property type="molecule type" value="Genomic_DNA"/>
</dbReference>
<dbReference type="EMBL" id="HQ204916">
    <property type="protein sequence ID" value="ADP90141.1"/>
    <property type="molecule type" value="Genomic_DNA"/>
</dbReference>
<dbReference type="EMBL" id="HQ204917">
    <property type="protein sequence ID" value="ADP90142.1"/>
    <property type="molecule type" value="Genomic_DNA"/>
</dbReference>
<dbReference type="EMBL" id="HQ204917">
    <property type="protein sequence ID" value="ADP90143.1"/>
    <property type="molecule type" value="Genomic_DNA"/>
</dbReference>
<dbReference type="EMBL" id="HQ204917">
    <property type="protein sequence ID" value="ADP90144.1"/>
    <property type="molecule type" value="Genomic_DNA"/>
</dbReference>
<dbReference type="EMBL" id="HQ204917">
    <property type="protein sequence ID" value="ADP90145.1"/>
    <property type="molecule type" value="Genomic_DNA"/>
</dbReference>
<dbReference type="EMBL" id="HQ204917">
    <property type="protein sequence ID" value="ADP90148.1"/>
    <property type="molecule type" value="Genomic_DNA"/>
</dbReference>
<dbReference type="EMBL" id="HQ204917">
    <property type="protein sequence ID" value="ADP90149.1"/>
    <property type="molecule type" value="Genomic_DNA"/>
</dbReference>
<dbReference type="EMBL" id="HQ204918">
    <property type="protein sequence ID" value="ADP90150.1"/>
    <property type="molecule type" value="Genomic_DNA"/>
</dbReference>
<dbReference type="EMBL" id="HQ204918">
    <property type="protein sequence ID" value="ADP90151.1"/>
    <property type="molecule type" value="Genomic_DNA"/>
</dbReference>
<dbReference type="EMBL" id="HQ204918">
    <property type="protein sequence ID" value="ADP90152.1"/>
    <property type="molecule type" value="Genomic_DNA"/>
</dbReference>
<dbReference type="EMBL" id="HQ204918">
    <property type="protein sequence ID" value="ADP90153.1"/>
    <property type="molecule type" value="Genomic_DNA"/>
</dbReference>
<dbReference type="EMBL" id="HQ204918">
    <property type="protein sequence ID" value="ADP90156.1"/>
    <property type="molecule type" value="Genomic_DNA"/>
</dbReference>
<dbReference type="EMBL" id="HQ204918">
    <property type="protein sequence ID" value="ADP90157.1"/>
    <property type="molecule type" value="Genomic_DNA"/>
</dbReference>
<dbReference type="EMBL" id="HQ204919">
    <property type="protein sequence ID" value="ADP90164.1"/>
    <property type="molecule type" value="Genomic_DNA"/>
</dbReference>
<dbReference type="EMBL" id="HQ204919">
    <property type="protein sequence ID" value="ADP90165.1"/>
    <property type="molecule type" value="Genomic_DNA"/>
</dbReference>
<dbReference type="EMBL" id="HQ204920">
    <property type="protein sequence ID" value="ADP90166.1"/>
    <property type="molecule type" value="Genomic_DNA"/>
</dbReference>
<dbReference type="EMBL" id="HQ204920">
    <property type="protein sequence ID" value="ADP90167.1"/>
    <property type="molecule type" value="Genomic_DNA"/>
</dbReference>
<dbReference type="EMBL" id="HQ204920">
    <property type="protein sequence ID" value="ADP90168.1"/>
    <property type="molecule type" value="Genomic_DNA"/>
</dbReference>
<dbReference type="EMBL" id="HQ204920">
    <property type="protein sequence ID" value="ADP90169.1"/>
    <property type="molecule type" value="Genomic_DNA"/>
</dbReference>
<dbReference type="EMBL" id="HQ204920">
    <property type="protein sequence ID" value="ADP90172.1"/>
    <property type="molecule type" value="Genomic_DNA"/>
</dbReference>
<dbReference type="EMBL" id="HQ204920">
    <property type="protein sequence ID" value="ADP90173.1"/>
    <property type="molecule type" value="Genomic_DNA"/>
</dbReference>
<dbReference type="EMBL" id="HQ204921">
    <property type="protein sequence ID" value="ADP90174.1"/>
    <property type="molecule type" value="Genomic_DNA"/>
</dbReference>
<dbReference type="EMBL" id="HQ204921">
    <property type="protein sequence ID" value="ADP90175.1"/>
    <property type="molecule type" value="Genomic_DNA"/>
</dbReference>
<dbReference type="EMBL" id="HQ204921">
    <property type="protein sequence ID" value="ADP90176.1"/>
    <property type="molecule type" value="Genomic_DNA"/>
</dbReference>
<dbReference type="EMBL" id="HQ204921">
    <property type="protein sequence ID" value="ADP90177.1"/>
    <property type="molecule type" value="Genomic_DNA"/>
</dbReference>
<dbReference type="EMBL" id="HQ204921">
    <property type="protein sequence ID" value="ADP90180.1"/>
    <property type="molecule type" value="Genomic_DNA"/>
</dbReference>
<dbReference type="EMBL" id="HQ204921">
    <property type="protein sequence ID" value="ADP90181.1"/>
    <property type="molecule type" value="Genomic_DNA"/>
</dbReference>
<dbReference type="EMBL" id="HQ204922">
    <property type="protein sequence ID" value="ADP90182.1"/>
    <property type="molecule type" value="Genomic_DNA"/>
</dbReference>
<dbReference type="EMBL" id="HQ204922">
    <property type="protein sequence ID" value="ADP90183.1"/>
    <property type="molecule type" value="Genomic_DNA"/>
</dbReference>
<dbReference type="EMBL" id="HQ204922">
    <property type="protein sequence ID" value="ADP90184.1"/>
    <property type="molecule type" value="Genomic_DNA"/>
</dbReference>
<dbReference type="EMBL" id="HQ204922">
    <property type="protein sequence ID" value="ADP90185.1"/>
    <property type="molecule type" value="Genomic_DNA"/>
</dbReference>
<dbReference type="EMBL" id="HQ204922">
    <property type="protein sequence ID" value="ADP90188.1"/>
    <property type="molecule type" value="Genomic_DNA"/>
</dbReference>
<dbReference type="EMBL" id="HQ204922">
    <property type="protein sequence ID" value="ADP90189.1"/>
    <property type="molecule type" value="Genomic_DNA"/>
</dbReference>
<dbReference type="EMBL" id="HQ204923">
    <property type="protein sequence ID" value="ADP90190.1"/>
    <property type="molecule type" value="Genomic_DNA"/>
</dbReference>
<dbReference type="EMBL" id="HQ204923">
    <property type="protein sequence ID" value="ADP90191.1"/>
    <property type="molecule type" value="Genomic_DNA"/>
</dbReference>
<dbReference type="EMBL" id="HQ204923">
    <property type="protein sequence ID" value="ADP90192.1"/>
    <property type="molecule type" value="Genomic_DNA"/>
</dbReference>
<dbReference type="EMBL" id="HQ204923">
    <property type="protein sequence ID" value="ADP90193.1"/>
    <property type="molecule type" value="Genomic_DNA"/>
</dbReference>
<dbReference type="EMBL" id="HQ204923">
    <property type="protein sequence ID" value="ADP90196.1"/>
    <property type="molecule type" value="Genomic_DNA"/>
</dbReference>
<dbReference type="EMBL" id="HQ204923">
    <property type="protein sequence ID" value="ADP90197.1"/>
    <property type="molecule type" value="Genomic_DNA"/>
</dbReference>
<dbReference type="EMBL" id="HQ204924">
    <property type="protein sequence ID" value="ADP90198.1"/>
    <property type="molecule type" value="Genomic_DNA"/>
</dbReference>
<dbReference type="EMBL" id="HQ204924">
    <property type="protein sequence ID" value="ADP90199.1"/>
    <property type="molecule type" value="Genomic_DNA"/>
</dbReference>
<dbReference type="EMBL" id="HQ204924">
    <property type="protein sequence ID" value="ADP90200.1"/>
    <property type="molecule type" value="Genomic_DNA"/>
</dbReference>
<dbReference type="EMBL" id="HQ204924">
    <property type="protein sequence ID" value="ADP90201.1"/>
    <property type="molecule type" value="Genomic_DNA"/>
</dbReference>
<dbReference type="EMBL" id="HQ204924">
    <property type="protein sequence ID" value="ADP90204.1"/>
    <property type="molecule type" value="Genomic_DNA"/>
</dbReference>
<dbReference type="EMBL" id="HQ204924">
    <property type="protein sequence ID" value="ADP90205.1"/>
    <property type="molecule type" value="Genomic_DNA"/>
</dbReference>
<dbReference type="EMBL" id="HQ204925">
    <property type="protein sequence ID" value="ADP90206.1"/>
    <property type="molecule type" value="Genomic_DNA"/>
</dbReference>
<dbReference type="EMBL" id="HQ204925">
    <property type="protein sequence ID" value="ADP90207.1"/>
    <property type="molecule type" value="Genomic_DNA"/>
</dbReference>
<dbReference type="EMBL" id="HQ204925">
    <property type="protein sequence ID" value="ADP90208.1"/>
    <property type="molecule type" value="Genomic_DNA"/>
</dbReference>
<dbReference type="EMBL" id="HQ204925">
    <property type="protein sequence ID" value="ADP90209.1"/>
    <property type="molecule type" value="Genomic_DNA"/>
</dbReference>
<dbReference type="EMBL" id="HQ204925">
    <property type="protein sequence ID" value="ADP90212.1"/>
    <property type="molecule type" value="Genomic_DNA"/>
</dbReference>
<dbReference type="EMBL" id="HQ204925">
    <property type="protein sequence ID" value="ADP90213.1"/>
    <property type="molecule type" value="Genomic_DNA"/>
</dbReference>
<dbReference type="EMBL" id="HQ204926">
    <property type="protein sequence ID" value="ADP90214.1"/>
    <property type="molecule type" value="Genomic_DNA"/>
</dbReference>
<dbReference type="EMBL" id="HQ204926">
    <property type="protein sequence ID" value="ADP90215.1"/>
    <property type="molecule type" value="Genomic_DNA"/>
</dbReference>
<dbReference type="EMBL" id="HQ204926">
    <property type="protein sequence ID" value="ADP90216.1"/>
    <property type="molecule type" value="Genomic_DNA"/>
</dbReference>
<dbReference type="EMBL" id="HQ204926">
    <property type="protein sequence ID" value="ADP90217.1"/>
    <property type="molecule type" value="Genomic_DNA"/>
</dbReference>
<dbReference type="EMBL" id="HQ204926">
    <property type="protein sequence ID" value="ADP90220.1"/>
    <property type="molecule type" value="Genomic_DNA"/>
</dbReference>
<dbReference type="EMBL" id="HQ204926">
    <property type="protein sequence ID" value="ADP90221.1"/>
    <property type="molecule type" value="Genomic_DNA"/>
</dbReference>
<dbReference type="EMBL" id="HQ204927">
    <property type="protein sequence ID" value="ADP90222.1"/>
    <property type="molecule type" value="Genomic_DNA"/>
</dbReference>
<dbReference type="EMBL" id="HQ204927">
    <property type="protein sequence ID" value="ADP90223.1"/>
    <property type="molecule type" value="Genomic_DNA"/>
</dbReference>
<dbReference type="EMBL" id="HQ204927">
    <property type="protein sequence ID" value="ADP90224.1"/>
    <property type="molecule type" value="Genomic_DNA"/>
</dbReference>
<dbReference type="EMBL" id="HQ204927">
    <property type="protein sequence ID" value="ADP90225.1"/>
    <property type="molecule type" value="Genomic_DNA"/>
</dbReference>
<dbReference type="EMBL" id="HQ204927">
    <property type="protein sequence ID" value="ADP90228.1"/>
    <property type="molecule type" value="Genomic_DNA"/>
</dbReference>
<dbReference type="EMBL" id="HQ204927">
    <property type="protein sequence ID" value="ADP90229.1"/>
    <property type="molecule type" value="Genomic_DNA"/>
</dbReference>
<dbReference type="EMBL" id="HQ204928">
    <property type="protein sequence ID" value="ADP90236.1"/>
    <property type="molecule type" value="Genomic_DNA"/>
</dbReference>
<dbReference type="EMBL" id="HQ204928">
    <property type="protein sequence ID" value="ADP90237.1"/>
    <property type="molecule type" value="Genomic_DNA"/>
</dbReference>
<dbReference type="EMBL" id="HQ204929">
    <property type="protein sequence ID" value="ADP90238.1"/>
    <property type="molecule type" value="Genomic_DNA"/>
</dbReference>
<dbReference type="EMBL" id="HQ204929">
    <property type="protein sequence ID" value="ADP90239.1"/>
    <property type="molecule type" value="Genomic_DNA"/>
</dbReference>
<dbReference type="EMBL" id="HQ204929">
    <property type="protein sequence ID" value="ADP90240.1"/>
    <property type="molecule type" value="Genomic_DNA"/>
</dbReference>
<dbReference type="EMBL" id="HQ204929">
    <property type="protein sequence ID" value="ADP90241.1"/>
    <property type="molecule type" value="Genomic_DNA"/>
</dbReference>
<dbReference type="EMBL" id="HQ204929">
    <property type="protein sequence ID" value="ADP90244.1"/>
    <property type="molecule type" value="Genomic_DNA"/>
</dbReference>
<dbReference type="EMBL" id="HQ204929">
    <property type="protein sequence ID" value="ADP90245.1"/>
    <property type="molecule type" value="Genomic_DNA"/>
</dbReference>
<dbReference type="EMBL" id="HQ204930">
    <property type="protein sequence ID" value="ADP90246.1"/>
    <property type="molecule type" value="Genomic_DNA"/>
</dbReference>
<dbReference type="EMBL" id="HQ204930">
    <property type="protein sequence ID" value="ADP90247.1"/>
    <property type="molecule type" value="Genomic_DNA"/>
</dbReference>
<dbReference type="EMBL" id="HQ204930">
    <property type="protein sequence ID" value="ADP90248.1"/>
    <property type="molecule type" value="Genomic_DNA"/>
</dbReference>
<dbReference type="EMBL" id="HQ204930">
    <property type="protein sequence ID" value="ADP90249.1"/>
    <property type="molecule type" value="Genomic_DNA"/>
</dbReference>
<dbReference type="EMBL" id="HQ204930">
    <property type="protein sequence ID" value="ADP90252.1"/>
    <property type="molecule type" value="Genomic_DNA"/>
</dbReference>
<dbReference type="EMBL" id="HQ204930">
    <property type="protein sequence ID" value="ADP90253.1"/>
    <property type="molecule type" value="Genomic_DNA"/>
</dbReference>
<dbReference type="EMBL" id="HQ204931">
    <property type="protein sequence ID" value="ADP90260.1"/>
    <property type="molecule type" value="Genomic_DNA"/>
</dbReference>
<dbReference type="EMBL" id="HQ204931">
    <property type="protein sequence ID" value="ADP90261.1"/>
    <property type="molecule type" value="Genomic_DNA"/>
</dbReference>
<dbReference type="EMBL" id="HQ204932">
    <property type="protein sequence ID" value="ADP90262.1"/>
    <property type="molecule type" value="Genomic_DNA"/>
</dbReference>
<dbReference type="EMBL" id="HQ204932">
    <property type="protein sequence ID" value="ADP90263.1"/>
    <property type="molecule type" value="Genomic_DNA"/>
</dbReference>
<dbReference type="EMBL" id="HQ204932">
    <property type="protein sequence ID" value="ADP90264.1"/>
    <property type="molecule type" value="Genomic_DNA"/>
</dbReference>
<dbReference type="EMBL" id="HQ204932">
    <property type="protein sequence ID" value="ADP90265.1"/>
    <property type="molecule type" value="Genomic_DNA"/>
</dbReference>
<dbReference type="EMBL" id="HQ204932">
    <property type="protein sequence ID" value="ADP90268.1"/>
    <property type="molecule type" value="Genomic_DNA"/>
</dbReference>
<dbReference type="EMBL" id="HQ204932">
    <property type="protein sequence ID" value="ADP90269.1"/>
    <property type="molecule type" value="Genomic_DNA"/>
</dbReference>
<dbReference type="EMBL" id="HQ204933">
    <property type="protein sequence ID" value="ADP90270.1"/>
    <property type="molecule type" value="Genomic_DNA"/>
</dbReference>
<dbReference type="EMBL" id="HQ204933">
    <property type="protein sequence ID" value="ADP90271.1"/>
    <property type="molecule type" value="Genomic_DNA"/>
</dbReference>
<dbReference type="EMBL" id="HQ204933">
    <property type="protein sequence ID" value="ADP90272.1"/>
    <property type="molecule type" value="Genomic_DNA"/>
</dbReference>
<dbReference type="EMBL" id="HQ204933">
    <property type="protein sequence ID" value="ADP90273.1"/>
    <property type="molecule type" value="Genomic_DNA"/>
</dbReference>
<dbReference type="EMBL" id="HQ204933">
    <property type="protein sequence ID" value="ADP90276.1"/>
    <property type="molecule type" value="Genomic_DNA"/>
</dbReference>
<dbReference type="EMBL" id="HQ204933">
    <property type="protein sequence ID" value="ADP90277.1"/>
    <property type="molecule type" value="Genomic_DNA"/>
</dbReference>
<dbReference type="EMBL" id="HQ204934">
    <property type="protein sequence ID" value="ADP90278.1"/>
    <property type="molecule type" value="Genomic_DNA"/>
</dbReference>
<dbReference type="EMBL" id="HQ204934">
    <property type="protein sequence ID" value="ADP90279.1"/>
    <property type="molecule type" value="Genomic_DNA"/>
</dbReference>
<dbReference type="EMBL" id="HQ204934">
    <property type="protein sequence ID" value="ADP90280.1"/>
    <property type="molecule type" value="Genomic_DNA"/>
</dbReference>
<dbReference type="EMBL" id="HQ204934">
    <property type="protein sequence ID" value="ADP90281.1"/>
    <property type="molecule type" value="Genomic_DNA"/>
</dbReference>
<dbReference type="EMBL" id="HQ204934">
    <property type="protein sequence ID" value="ADP90284.1"/>
    <property type="molecule type" value="Genomic_DNA"/>
</dbReference>
<dbReference type="EMBL" id="HQ204934">
    <property type="protein sequence ID" value="ADP90285.1"/>
    <property type="molecule type" value="Genomic_DNA"/>
</dbReference>
<dbReference type="EMBL" id="HQ204935">
    <property type="protein sequence ID" value="ADP90286.1"/>
    <property type="molecule type" value="Genomic_DNA"/>
</dbReference>
<dbReference type="EMBL" id="HQ204935">
    <property type="protein sequence ID" value="ADP90287.1"/>
    <property type="molecule type" value="Genomic_DNA"/>
</dbReference>
<dbReference type="EMBL" id="HQ204935">
    <property type="protein sequence ID" value="ADP90288.1"/>
    <property type="molecule type" value="Genomic_DNA"/>
</dbReference>
<dbReference type="EMBL" id="HQ204935">
    <property type="protein sequence ID" value="ADP90289.1"/>
    <property type="molecule type" value="Genomic_DNA"/>
</dbReference>
<dbReference type="EMBL" id="HQ204935">
    <property type="protein sequence ID" value="ADP90292.1"/>
    <property type="molecule type" value="Genomic_DNA"/>
</dbReference>
<dbReference type="EMBL" id="HQ204935">
    <property type="protein sequence ID" value="ADP90293.1"/>
    <property type="molecule type" value="Genomic_DNA"/>
</dbReference>
<dbReference type="EMBL" id="HQ204936">
    <property type="protein sequence ID" value="ADP90294.1"/>
    <property type="molecule type" value="Genomic_DNA"/>
</dbReference>
<dbReference type="EMBL" id="HQ204936">
    <property type="protein sequence ID" value="ADP90295.1"/>
    <property type="molecule type" value="Genomic_DNA"/>
</dbReference>
<dbReference type="EMBL" id="HQ204936">
    <property type="protein sequence ID" value="ADP90296.1"/>
    <property type="molecule type" value="Genomic_DNA"/>
</dbReference>
<dbReference type="EMBL" id="HQ204936">
    <property type="protein sequence ID" value="ADP90297.1"/>
    <property type="molecule type" value="Genomic_DNA"/>
</dbReference>
<dbReference type="EMBL" id="HQ204936">
    <property type="protein sequence ID" value="ADP90300.1"/>
    <property type="molecule type" value="Genomic_DNA"/>
</dbReference>
<dbReference type="EMBL" id="HQ204936">
    <property type="protein sequence ID" value="ADP90301.1"/>
    <property type="molecule type" value="Genomic_DNA"/>
</dbReference>
<dbReference type="EMBL" id="HQ204937">
    <property type="protein sequence ID" value="ADP90308.1"/>
    <property type="molecule type" value="Genomic_DNA"/>
</dbReference>
<dbReference type="EMBL" id="HQ204937">
    <property type="protein sequence ID" value="ADP90309.1"/>
    <property type="molecule type" value="Genomic_DNA"/>
</dbReference>
<dbReference type="EMBL" id="HQ204938">
    <property type="protein sequence ID" value="ADP90310.1"/>
    <property type="molecule type" value="Genomic_DNA"/>
</dbReference>
<dbReference type="EMBL" id="HQ204938">
    <property type="protein sequence ID" value="ADP90311.1"/>
    <property type="molecule type" value="Genomic_DNA"/>
</dbReference>
<dbReference type="EMBL" id="HQ204938">
    <property type="protein sequence ID" value="ADP90312.1"/>
    <property type="molecule type" value="Genomic_DNA"/>
</dbReference>
<dbReference type="EMBL" id="HQ204938">
    <property type="protein sequence ID" value="ADP90313.1"/>
    <property type="molecule type" value="Genomic_DNA"/>
</dbReference>
<dbReference type="EMBL" id="HQ204938">
    <property type="protein sequence ID" value="ADP90316.1"/>
    <property type="molecule type" value="Genomic_DNA"/>
</dbReference>
<dbReference type="EMBL" id="HQ204938">
    <property type="protein sequence ID" value="ADP90317.1"/>
    <property type="molecule type" value="Genomic_DNA"/>
</dbReference>
<dbReference type="EMBL" id="HQ204939">
    <property type="protein sequence ID" value="ADP90318.1"/>
    <property type="molecule type" value="Genomic_DNA"/>
</dbReference>
<dbReference type="EMBL" id="HQ204939">
    <property type="protein sequence ID" value="ADP90319.1"/>
    <property type="molecule type" value="Genomic_DNA"/>
</dbReference>
<dbReference type="EMBL" id="HQ204939">
    <property type="protein sequence ID" value="ADP90320.1"/>
    <property type="molecule type" value="Genomic_DNA"/>
</dbReference>
<dbReference type="EMBL" id="HQ204939">
    <property type="protein sequence ID" value="ADP90321.1"/>
    <property type="molecule type" value="Genomic_DNA"/>
</dbReference>
<dbReference type="EMBL" id="HQ204939">
    <property type="protein sequence ID" value="ADP90324.1"/>
    <property type="molecule type" value="Genomic_DNA"/>
</dbReference>
<dbReference type="EMBL" id="HQ204939">
    <property type="protein sequence ID" value="ADP90325.1"/>
    <property type="molecule type" value="Genomic_DNA"/>
</dbReference>
<dbReference type="EMBL" id="HQ204940">
    <property type="protein sequence ID" value="ADP90326.1"/>
    <property type="molecule type" value="Genomic_DNA"/>
</dbReference>
<dbReference type="EMBL" id="HQ204940">
    <property type="protein sequence ID" value="ADP90327.1"/>
    <property type="molecule type" value="Genomic_DNA"/>
</dbReference>
<dbReference type="EMBL" id="HQ204940">
    <property type="protein sequence ID" value="ADP90328.1"/>
    <property type="molecule type" value="Genomic_DNA"/>
</dbReference>
<dbReference type="EMBL" id="HQ204940">
    <property type="protein sequence ID" value="ADP90329.1"/>
    <property type="molecule type" value="Genomic_DNA"/>
</dbReference>
<dbReference type="EMBL" id="HQ204940">
    <property type="protein sequence ID" value="ADP90332.1"/>
    <property type="molecule type" value="Genomic_DNA"/>
</dbReference>
<dbReference type="EMBL" id="HQ204940">
    <property type="protein sequence ID" value="ADP90333.1"/>
    <property type="molecule type" value="Genomic_DNA"/>
</dbReference>
<dbReference type="EMBL" id="HQ204941">
    <property type="protein sequence ID" value="ADP90334.1"/>
    <property type="molecule type" value="Genomic_DNA"/>
</dbReference>
<dbReference type="EMBL" id="HQ204941">
    <property type="protein sequence ID" value="ADP90335.1"/>
    <property type="molecule type" value="Genomic_DNA"/>
</dbReference>
<dbReference type="EMBL" id="HQ204941">
    <property type="protein sequence ID" value="ADP90336.1"/>
    <property type="molecule type" value="Genomic_DNA"/>
</dbReference>
<dbReference type="EMBL" id="HQ204941">
    <property type="protein sequence ID" value="ADP90337.1"/>
    <property type="molecule type" value="Genomic_DNA"/>
</dbReference>
<dbReference type="EMBL" id="HQ204941">
    <property type="protein sequence ID" value="ADP90340.1"/>
    <property type="molecule type" value="Genomic_DNA"/>
</dbReference>
<dbReference type="EMBL" id="HQ204941">
    <property type="protein sequence ID" value="ADP90341.1"/>
    <property type="molecule type" value="Genomic_DNA"/>
</dbReference>
<dbReference type="EMBL" id="HQ204942">
    <property type="protein sequence ID" value="ADP90342.1"/>
    <property type="molecule type" value="Genomic_DNA"/>
</dbReference>
<dbReference type="EMBL" id="HQ204942">
    <property type="protein sequence ID" value="ADP90343.1"/>
    <property type="molecule type" value="Genomic_DNA"/>
</dbReference>
<dbReference type="EMBL" id="HQ204942">
    <property type="protein sequence ID" value="ADP90344.1"/>
    <property type="molecule type" value="Genomic_DNA"/>
</dbReference>
<dbReference type="EMBL" id="HQ204942">
    <property type="protein sequence ID" value="ADP90345.1"/>
    <property type="molecule type" value="Genomic_DNA"/>
</dbReference>
<dbReference type="EMBL" id="HQ204942">
    <property type="protein sequence ID" value="ADP90348.1"/>
    <property type="molecule type" value="Genomic_DNA"/>
</dbReference>
<dbReference type="EMBL" id="HQ204942">
    <property type="protein sequence ID" value="ADP90349.1"/>
    <property type="molecule type" value="Genomic_DNA"/>
</dbReference>
<dbReference type="EMBL" id="HQ204943">
    <property type="protein sequence ID" value="ADP90350.1"/>
    <property type="molecule type" value="Genomic_DNA"/>
</dbReference>
<dbReference type="EMBL" id="HQ204943">
    <property type="protein sequence ID" value="ADP90351.1"/>
    <property type="molecule type" value="Genomic_DNA"/>
</dbReference>
<dbReference type="EMBL" id="HQ204943">
    <property type="protein sequence ID" value="ADP90352.1"/>
    <property type="molecule type" value="Genomic_DNA"/>
</dbReference>
<dbReference type="EMBL" id="HQ204943">
    <property type="protein sequence ID" value="ADP90353.1"/>
    <property type="molecule type" value="Genomic_DNA"/>
</dbReference>
<dbReference type="EMBL" id="HQ204943">
    <property type="protein sequence ID" value="ADP90356.1"/>
    <property type="molecule type" value="Genomic_DNA"/>
</dbReference>
<dbReference type="EMBL" id="HQ204943">
    <property type="protein sequence ID" value="ADP90357.1"/>
    <property type="molecule type" value="Genomic_DNA"/>
</dbReference>
<dbReference type="EMBL" id="HQ204944">
    <property type="protein sequence ID" value="ADP90358.1"/>
    <property type="molecule type" value="Genomic_DNA"/>
</dbReference>
<dbReference type="EMBL" id="HQ204944">
    <property type="protein sequence ID" value="ADP90359.1"/>
    <property type="molecule type" value="Genomic_DNA"/>
</dbReference>
<dbReference type="EMBL" id="HQ204944">
    <property type="protein sequence ID" value="ADP90360.1"/>
    <property type="molecule type" value="Genomic_DNA"/>
</dbReference>
<dbReference type="EMBL" id="HQ204944">
    <property type="protein sequence ID" value="ADP90361.1"/>
    <property type="molecule type" value="Genomic_DNA"/>
</dbReference>
<dbReference type="EMBL" id="HQ204944">
    <property type="protein sequence ID" value="ADP90364.1"/>
    <property type="molecule type" value="Genomic_DNA"/>
</dbReference>
<dbReference type="EMBL" id="HQ204944">
    <property type="protein sequence ID" value="ADP90365.1"/>
    <property type="molecule type" value="Genomic_DNA"/>
</dbReference>
<dbReference type="EMBL" id="HQ204945">
    <property type="protein sequence ID" value="ADP90366.1"/>
    <property type="molecule type" value="Genomic_DNA"/>
</dbReference>
<dbReference type="EMBL" id="HQ204945">
    <property type="protein sequence ID" value="ADP90367.1"/>
    <property type="molecule type" value="Genomic_DNA"/>
</dbReference>
<dbReference type="EMBL" id="HQ204945">
    <property type="protein sequence ID" value="ADP90368.1"/>
    <property type="molecule type" value="Genomic_DNA"/>
</dbReference>
<dbReference type="EMBL" id="HQ204945">
    <property type="protein sequence ID" value="ADP90369.1"/>
    <property type="molecule type" value="Genomic_DNA"/>
</dbReference>
<dbReference type="EMBL" id="HQ204945">
    <property type="protein sequence ID" value="ADP90372.1"/>
    <property type="molecule type" value="Genomic_DNA"/>
</dbReference>
<dbReference type="EMBL" id="HQ204945">
    <property type="protein sequence ID" value="ADP90373.1"/>
    <property type="molecule type" value="Genomic_DNA"/>
</dbReference>
<dbReference type="EMBL" id="AC048351">
    <property type="status" value="NOT_ANNOTATED_CDS"/>
    <property type="molecule type" value="Genomic_DNA"/>
</dbReference>
<dbReference type="EMBL" id="AC106710">
    <property type="status" value="NOT_ANNOTATED_CDS"/>
    <property type="molecule type" value="Genomic_DNA"/>
</dbReference>
<dbReference type="EMBL" id="CH471052">
    <property type="protein sequence ID" value="EAW78064.1"/>
    <property type="molecule type" value="Genomic_DNA"/>
</dbReference>
<dbReference type="EMBL" id="CH471052">
    <property type="protein sequence ID" value="EAW78065.1"/>
    <property type="molecule type" value="Genomic_DNA"/>
</dbReference>
<dbReference type="EMBL" id="CH471052">
    <property type="protein sequence ID" value="EAW78066.1"/>
    <property type="molecule type" value="Genomic_DNA"/>
</dbReference>
<dbReference type="EMBL" id="CH471052">
    <property type="protein sequence ID" value="EAW78067.1"/>
    <property type="molecule type" value="Genomic_DNA"/>
</dbReference>
<dbReference type="EMBL" id="CH471052">
    <property type="protein sequence ID" value="EAW78069.1"/>
    <property type="molecule type" value="Genomic_DNA"/>
</dbReference>
<dbReference type="EMBL" id="CH471052">
    <property type="protein sequence ID" value="EAW78070.1"/>
    <property type="molecule type" value="Genomic_DNA"/>
</dbReference>
<dbReference type="EMBL" id="CH471052">
    <property type="protein sequence ID" value="EAW78071.1"/>
    <property type="molecule type" value="Genomic_DNA"/>
</dbReference>
<dbReference type="EMBL" id="BC075805">
    <property type="protein sequence ID" value="AAH75805.1"/>
    <property type="molecule type" value="mRNA"/>
</dbReference>
<dbReference type="EMBL" id="AF416919">
    <property type="status" value="NOT_ANNOTATED_CDS"/>
    <property type="molecule type" value="Genomic_DNA"/>
</dbReference>
<dbReference type="EMBL" id="AF416920">
    <property type="status" value="NOT_ANNOTATED_CDS"/>
    <property type="molecule type" value="Genomic_DNA"/>
</dbReference>
<dbReference type="CCDS" id="CCDS33917.1">
    <molecule id="O60313-2"/>
</dbReference>
<dbReference type="CCDS" id="CCDS43186.1">
    <molecule id="O60313-1"/>
</dbReference>
<dbReference type="CCDS" id="CCDS87183.1">
    <molecule id="O60313-13"/>
</dbReference>
<dbReference type="PIR" id="T00336">
    <property type="entry name" value="T00336"/>
</dbReference>
<dbReference type="RefSeq" id="NP_056375.2">
    <molecule id="O60313-1"/>
    <property type="nucleotide sequence ID" value="NM_015560.3"/>
</dbReference>
<dbReference type="RefSeq" id="NP_570844.1">
    <molecule id="O60313-13"/>
    <property type="nucleotide sequence ID" value="NM_130831.3"/>
</dbReference>
<dbReference type="RefSeq" id="NP_570846.1">
    <molecule id="O60313-9"/>
    <property type="nucleotide sequence ID" value="NM_130833.3"/>
</dbReference>
<dbReference type="RefSeq" id="NP_570847.2">
    <molecule id="O60313-11"/>
    <property type="nucleotide sequence ID" value="NM_130834.3"/>
</dbReference>
<dbReference type="RefSeq" id="NP_570849.2">
    <molecule id="O60313-2"/>
    <property type="nucleotide sequence ID" value="NM_130836.3"/>
</dbReference>
<dbReference type="RefSeq" id="NP_570850.2">
    <molecule id="O60313-10"/>
    <property type="nucleotide sequence ID" value="NM_130837.3"/>
</dbReference>
<dbReference type="PDB" id="6JTG">
    <property type="method" value="X-ray"/>
    <property type="resolution" value="2.40 A"/>
    <property type="chains" value="A=263-571"/>
</dbReference>
<dbReference type="PDB" id="8CT1">
    <property type="method" value="EM"/>
    <property type="resolution" value="4.80 A"/>
    <property type="chains" value="A/B/C/D/E/F/G/H/I/J/K/L/M/N/O/P/Q/R/S/T/U/V/W/X/Y/Z/a/b/c/d=1-960"/>
</dbReference>
<dbReference type="PDB" id="8CT9">
    <property type="method" value="EM"/>
    <property type="resolution" value="6.80 A"/>
    <property type="chains" value="A/B/C/D/E/F/G/H/I/J/K/L/M/N/O/P/Q/R/S/T/U/V/W/X/Y/Z/a/b/c/d=1-960"/>
</dbReference>
<dbReference type="PDB" id="8EEW">
    <property type="method" value="EM"/>
    <property type="resolution" value="5.48 A"/>
    <property type="chains" value="A/B=195-960"/>
</dbReference>
<dbReference type="PDB" id="8EF7">
    <property type="method" value="EM"/>
    <property type="resolution" value="9.68 A"/>
    <property type="chains" value="A/B=195-960"/>
</dbReference>
<dbReference type="PDB" id="8EFF">
    <property type="method" value="EM"/>
    <property type="resolution" value="5.48 A"/>
    <property type="chains" value="A/B/C/D=195-960"/>
</dbReference>
<dbReference type="PDB" id="8EFR">
    <property type="method" value="EM"/>
    <property type="resolution" value="5.48 A"/>
    <property type="chains" value="A/B/C/D/E/F/G/H/I/J/K/L/M/N/O/P/Q/R=195-960"/>
</dbReference>
<dbReference type="PDB" id="8EFS">
    <property type="method" value="EM"/>
    <property type="resolution" value="9.68 A"/>
    <property type="chains" value="A/B/C/D=195-960"/>
</dbReference>
<dbReference type="PDB" id="8EFT">
    <property type="method" value="EM"/>
    <property type="resolution" value="9.68 A"/>
    <property type="chains" value="A/B/C/D/E/F/G/H/I/J/K/L/M/N/O/P/Q/R=195-960"/>
</dbReference>
<dbReference type="PDBsum" id="6JTG"/>
<dbReference type="PDBsum" id="8CT1"/>
<dbReference type="PDBsum" id="8CT9"/>
<dbReference type="PDBsum" id="8EEW"/>
<dbReference type="PDBsum" id="8EF7"/>
<dbReference type="PDBsum" id="8EFF"/>
<dbReference type="PDBsum" id="8EFR"/>
<dbReference type="PDBsum" id="8EFS"/>
<dbReference type="PDBsum" id="8EFT"/>
<dbReference type="EMDB" id="EMD-0722"/>
<dbReference type="EMDB" id="EMD-26977"/>
<dbReference type="EMDB" id="EMD-26984"/>
<dbReference type="EMDB" id="EMD-28063"/>
<dbReference type="EMDB" id="EMD-28074"/>
<dbReference type="EMDB" id="EMD-40192"/>
<dbReference type="EMDB" id="EMD-40193"/>
<dbReference type="EMDB" id="EMD-40197"/>
<dbReference type="EMDB" id="EMD-40198"/>
<dbReference type="EMDB" id="EMD-40200"/>
<dbReference type="EMDB" id="EMD-40202"/>
<dbReference type="EMDB" id="EMD-40203"/>
<dbReference type="EMDB" id="EMD-40204"/>
<dbReference type="EMDB" id="EMD-40210"/>
<dbReference type="EMDB" id="EMD-40211"/>
<dbReference type="EMDB" id="EMD-40212"/>
<dbReference type="EMDB" id="EMD-40213"/>
<dbReference type="EMDB" id="EMD-40214"/>
<dbReference type="EMDB" id="EMD-40215"/>
<dbReference type="EMDB" id="EMD-40216"/>
<dbReference type="EMDB" id="EMD-40217"/>
<dbReference type="EMDB" id="EMD-9901"/>
<dbReference type="EMDB" id="EMD-9902"/>
<dbReference type="EMDB" id="EMD-9903"/>
<dbReference type="SMR" id="O60313"/>
<dbReference type="BioGRID" id="111024">
    <property type="interactions" value="220"/>
</dbReference>
<dbReference type="CORUM" id="O60313"/>
<dbReference type="FunCoup" id="O60313">
    <property type="interactions" value="3194"/>
</dbReference>
<dbReference type="IntAct" id="O60313">
    <property type="interactions" value="75"/>
</dbReference>
<dbReference type="MINT" id="O60313"/>
<dbReference type="STRING" id="9606.ENSP00000354681"/>
<dbReference type="ChEMBL" id="CHEMBL4105705"/>
<dbReference type="TCDB" id="1.N.6.1.2">
    <property type="family name" value="the mitochondrial inner/outer membrane fusion (mmf) family"/>
</dbReference>
<dbReference type="GlyGen" id="O60313">
    <property type="glycosylation" value="1 site, 1 O-linked glycan (1 site)"/>
</dbReference>
<dbReference type="iPTMnet" id="O60313"/>
<dbReference type="PhosphoSitePlus" id="O60313"/>
<dbReference type="SwissPalm" id="O60313"/>
<dbReference type="BioMuta" id="OPA1"/>
<dbReference type="jPOST" id="O60313"/>
<dbReference type="MassIVE" id="O60313"/>
<dbReference type="PaxDb" id="9606-ENSP00000354681"/>
<dbReference type="PeptideAtlas" id="O60313"/>
<dbReference type="ProteomicsDB" id="15297"/>
<dbReference type="ProteomicsDB" id="15298"/>
<dbReference type="ProteomicsDB" id="15300"/>
<dbReference type="ProteomicsDB" id="49340">
    <molecule id="O60313-1"/>
</dbReference>
<dbReference type="ProteomicsDB" id="49341">
    <molecule id="O60313-2"/>
</dbReference>
<dbReference type="Pumba" id="O60313"/>
<dbReference type="Antibodypedia" id="33885">
    <property type="antibodies" value="318 antibodies from 33 providers"/>
</dbReference>
<dbReference type="DNASU" id="4976"/>
<dbReference type="Ensembl" id="ENST00000361150.6">
    <molecule id="O60313-9"/>
    <property type="protein sequence ID" value="ENSP00000354781.2"/>
    <property type="gene ID" value="ENSG00000198836.11"/>
</dbReference>
<dbReference type="Ensembl" id="ENST00000361510.8">
    <molecule id="O60313-10"/>
    <property type="protein sequence ID" value="ENSP00000355324.2"/>
    <property type="gene ID" value="ENSG00000198836.11"/>
</dbReference>
<dbReference type="Ensembl" id="ENST00000361828.7">
    <molecule id="O60313-1"/>
    <property type="protein sequence ID" value="ENSP00000354429.3"/>
    <property type="gene ID" value="ENSG00000198836.11"/>
</dbReference>
<dbReference type="Ensembl" id="ENST00000361908.8">
    <molecule id="O60313-2"/>
    <property type="protein sequence ID" value="ENSP00000354681.3"/>
    <property type="gene ID" value="ENSG00000198836.11"/>
</dbReference>
<dbReference type="Ensembl" id="ENST00000392437.6">
    <molecule id="O60313-11"/>
    <property type="protein sequence ID" value="ENSP00000376232.2"/>
    <property type="gene ID" value="ENSG00000198836.11"/>
</dbReference>
<dbReference type="Ensembl" id="ENST00000646793.1">
    <molecule id="O60313-13"/>
    <property type="protein sequence ID" value="ENSP00000494512.1"/>
    <property type="gene ID" value="ENSG00000198836.11"/>
</dbReference>
<dbReference type="GeneID" id="4976"/>
<dbReference type="KEGG" id="hsa:4976"/>
<dbReference type="MANE-Select" id="ENST00000361510.8">
    <molecule id="O60313-10"/>
    <property type="protein sequence ID" value="ENSP00000355324.2"/>
    <property type="RefSeq nucleotide sequence ID" value="NM_130837.3"/>
    <property type="RefSeq protein sequence ID" value="NP_570850.2"/>
</dbReference>
<dbReference type="UCSC" id="uc003ftg.4">
    <property type="organism name" value="human"/>
</dbReference>
<dbReference type="UCSC" id="uc003fti.3">
    <molecule id="O60313-1"/>
    <property type="organism name" value="human"/>
</dbReference>
<dbReference type="UCSC" id="uc003ftj.4">
    <property type="organism name" value="human"/>
</dbReference>
<dbReference type="UCSC" id="uc003ftk.4">
    <property type="organism name" value="human"/>
</dbReference>
<dbReference type="AGR" id="HGNC:8140"/>
<dbReference type="CTD" id="4976"/>
<dbReference type="DisGeNET" id="4976"/>
<dbReference type="GeneCards" id="OPA1"/>
<dbReference type="HGNC" id="HGNC:8140">
    <property type="gene designation" value="OPA1"/>
</dbReference>
<dbReference type="HPA" id="ENSG00000198836">
    <property type="expression patterns" value="Low tissue specificity"/>
</dbReference>
<dbReference type="MalaCards" id="OPA1"/>
<dbReference type="MIM" id="125250">
    <property type="type" value="phenotype"/>
</dbReference>
<dbReference type="MIM" id="165500">
    <property type="type" value="phenotype"/>
</dbReference>
<dbReference type="MIM" id="210000">
    <property type="type" value="phenotype"/>
</dbReference>
<dbReference type="MIM" id="605290">
    <property type="type" value="gene"/>
</dbReference>
<dbReference type="MIM" id="616896">
    <property type="type" value="phenotype"/>
</dbReference>
<dbReference type="neXtProt" id="NX_O60313"/>
<dbReference type="OpenTargets" id="ENSG00000198836"/>
<dbReference type="Orphanet" id="1215">
    <property type="disease" value="Autosomal dominant optic atrophy plus syndrome"/>
</dbReference>
<dbReference type="Orphanet" id="98673">
    <property type="disease" value="Autosomal dominant optic atrophy, classic form"/>
</dbReference>
<dbReference type="Orphanet" id="1239">
    <property type="disease" value="Behr syndrome"/>
</dbReference>
<dbReference type="PharmGKB" id="PA31927"/>
<dbReference type="VEuPathDB" id="HostDB:ENSG00000198836"/>
<dbReference type="eggNOG" id="KOG0447">
    <property type="taxonomic scope" value="Eukaryota"/>
</dbReference>
<dbReference type="GeneTree" id="ENSGT00550000074851"/>
<dbReference type="InParanoid" id="O60313"/>
<dbReference type="OMA" id="PYHIACF"/>
<dbReference type="OrthoDB" id="415706at2759"/>
<dbReference type="PAN-GO" id="O60313">
    <property type="GO annotations" value="6 GO annotations based on evolutionary models"/>
</dbReference>
<dbReference type="PhylomeDB" id="O60313"/>
<dbReference type="TreeFam" id="TF314250"/>
<dbReference type="BRENDA" id="3.6.5.5">
    <property type="organism ID" value="2681"/>
</dbReference>
<dbReference type="PathwayCommons" id="O60313"/>
<dbReference type="Reactome" id="R-HSA-169911">
    <property type="pathway name" value="Regulation of Apoptosis"/>
</dbReference>
<dbReference type="Reactome" id="R-HSA-9837999">
    <property type="pathway name" value="Mitochondrial protein degradation"/>
</dbReference>
<dbReference type="SignaLink" id="O60313"/>
<dbReference type="SIGNOR" id="O60313"/>
<dbReference type="BioGRID-ORCS" id="4976">
    <property type="hits" value="470 hits in 1165 CRISPR screens"/>
</dbReference>
<dbReference type="CD-CODE" id="FB4E32DD">
    <property type="entry name" value="Presynaptic clusters and postsynaptic densities"/>
</dbReference>
<dbReference type="ChiTaRS" id="OPA1">
    <property type="organism name" value="human"/>
</dbReference>
<dbReference type="GeneWiki" id="Optic_atrophy_1"/>
<dbReference type="GenomeRNAi" id="4976"/>
<dbReference type="Pharos" id="O60313">
    <property type="development level" value="Tchem"/>
</dbReference>
<dbReference type="PRO" id="PR:O60313"/>
<dbReference type="Proteomes" id="UP000005640">
    <property type="component" value="Chromosome 3"/>
</dbReference>
<dbReference type="RNAct" id="O60313">
    <property type="molecule type" value="protein"/>
</dbReference>
<dbReference type="Bgee" id="ENSG00000198836">
    <property type="expression patterns" value="Expressed in adrenal tissue and 205 other cell types or tissues"/>
</dbReference>
<dbReference type="ExpressionAtlas" id="O60313">
    <property type="expression patterns" value="baseline and differential"/>
</dbReference>
<dbReference type="GO" id="GO:1904115">
    <property type="term" value="C:axon cytoplasm"/>
    <property type="evidence" value="ECO:0007669"/>
    <property type="project" value="GOC"/>
</dbReference>
<dbReference type="GO" id="GO:0005737">
    <property type="term" value="C:cytoplasm"/>
    <property type="evidence" value="ECO:0000318"/>
    <property type="project" value="GO_Central"/>
</dbReference>
<dbReference type="GO" id="GO:0005829">
    <property type="term" value="C:cytosol"/>
    <property type="evidence" value="ECO:0000314"/>
    <property type="project" value="HPA"/>
</dbReference>
<dbReference type="GO" id="GO:0030425">
    <property type="term" value="C:dendrite"/>
    <property type="evidence" value="ECO:0000250"/>
    <property type="project" value="UniProtKB"/>
</dbReference>
<dbReference type="GO" id="GO:0016020">
    <property type="term" value="C:membrane"/>
    <property type="evidence" value="ECO:0007005"/>
    <property type="project" value="UniProtKB"/>
</dbReference>
<dbReference type="GO" id="GO:0005874">
    <property type="term" value="C:microtubule"/>
    <property type="evidence" value="ECO:0000318"/>
    <property type="project" value="GO_Central"/>
</dbReference>
<dbReference type="GO" id="GO:0030061">
    <property type="term" value="C:mitochondrial crista"/>
    <property type="evidence" value="ECO:0000314"/>
    <property type="project" value="UniProtKB"/>
</dbReference>
<dbReference type="GO" id="GO:0005743">
    <property type="term" value="C:mitochondrial inner membrane"/>
    <property type="evidence" value="ECO:0000250"/>
    <property type="project" value="ParkinsonsUK-UCL"/>
</dbReference>
<dbReference type="GO" id="GO:0005758">
    <property type="term" value="C:mitochondrial intermembrane space"/>
    <property type="evidence" value="ECO:0000314"/>
    <property type="project" value="UniProtKB"/>
</dbReference>
<dbReference type="GO" id="GO:0031966">
    <property type="term" value="C:mitochondrial membrane"/>
    <property type="evidence" value="ECO:0000318"/>
    <property type="project" value="GO_Central"/>
</dbReference>
<dbReference type="GO" id="GO:0005741">
    <property type="term" value="C:mitochondrial outer membrane"/>
    <property type="evidence" value="ECO:0000314"/>
    <property type="project" value="UniProtKB"/>
</dbReference>
<dbReference type="GO" id="GO:0005739">
    <property type="term" value="C:mitochondrion"/>
    <property type="evidence" value="ECO:0000314"/>
    <property type="project" value="HPA"/>
</dbReference>
<dbReference type="GO" id="GO:0005654">
    <property type="term" value="C:nucleoplasm"/>
    <property type="evidence" value="ECO:0000314"/>
    <property type="project" value="HPA"/>
</dbReference>
<dbReference type="GO" id="GO:1901612">
    <property type="term" value="F:cardiolipin binding"/>
    <property type="evidence" value="ECO:0000314"/>
    <property type="project" value="UniProtKB"/>
</dbReference>
<dbReference type="GO" id="GO:0005525">
    <property type="term" value="F:GTP binding"/>
    <property type="evidence" value="ECO:0007669"/>
    <property type="project" value="UniProtKB-KW"/>
</dbReference>
<dbReference type="GO" id="GO:0003924">
    <property type="term" value="F:GTPase activity"/>
    <property type="evidence" value="ECO:0000314"/>
    <property type="project" value="UniProtKB"/>
</dbReference>
<dbReference type="GO" id="GO:0140523">
    <property type="term" value="F:GTPase-dependent fusogenic activity"/>
    <property type="evidence" value="ECO:0000314"/>
    <property type="project" value="UniProtKB"/>
</dbReference>
<dbReference type="GO" id="GO:0000287">
    <property type="term" value="F:magnesium ion binding"/>
    <property type="evidence" value="ECO:0000303"/>
    <property type="project" value="UniProtKB"/>
</dbReference>
<dbReference type="GO" id="GO:0180020">
    <property type="term" value="F:membrane bending activity"/>
    <property type="evidence" value="ECO:0000314"/>
    <property type="project" value="UniProtKB"/>
</dbReference>
<dbReference type="GO" id="GO:0008017">
    <property type="term" value="F:microtubule binding"/>
    <property type="evidence" value="ECO:0000318"/>
    <property type="project" value="GO_Central"/>
</dbReference>
<dbReference type="GO" id="GO:0070300">
    <property type="term" value="F:phosphatidic acid binding"/>
    <property type="evidence" value="ECO:0000314"/>
    <property type="project" value="UniProtKB"/>
</dbReference>
<dbReference type="GO" id="GO:0006915">
    <property type="term" value="P:apoptotic process"/>
    <property type="evidence" value="ECO:0007669"/>
    <property type="project" value="UniProtKB-KW"/>
</dbReference>
<dbReference type="GO" id="GO:0019896">
    <property type="term" value="P:axonal transport of mitochondrion"/>
    <property type="evidence" value="ECO:0000304"/>
    <property type="project" value="UniProtKB"/>
</dbReference>
<dbReference type="GO" id="GO:0090398">
    <property type="term" value="P:cellular senescence"/>
    <property type="evidence" value="ECO:0000314"/>
    <property type="project" value="UniProtKB"/>
</dbReference>
<dbReference type="GO" id="GO:0042407">
    <property type="term" value="P:cristae formation"/>
    <property type="evidence" value="ECO:0000315"/>
    <property type="project" value="UniProtKB"/>
</dbReference>
<dbReference type="GO" id="GO:0006897">
    <property type="term" value="P:endocytosis"/>
    <property type="evidence" value="ECO:0000318"/>
    <property type="project" value="GO_Central"/>
</dbReference>
<dbReference type="GO" id="GO:0046039">
    <property type="term" value="P:GTP metabolic process"/>
    <property type="evidence" value="ECO:0000314"/>
    <property type="project" value="UniProtKB"/>
</dbReference>
<dbReference type="GO" id="GO:0007007">
    <property type="term" value="P:inner mitochondrial membrane organization"/>
    <property type="evidence" value="ECO:0000314"/>
    <property type="project" value="UniProtKB"/>
</dbReference>
<dbReference type="GO" id="GO:0048312">
    <property type="term" value="P:intracellular distribution of mitochondria"/>
    <property type="evidence" value="ECO:0000318"/>
    <property type="project" value="GO_Central"/>
</dbReference>
<dbReference type="GO" id="GO:0097749">
    <property type="term" value="P:membrane tubulation"/>
    <property type="evidence" value="ECO:0000314"/>
    <property type="project" value="UniProtKB"/>
</dbReference>
<dbReference type="GO" id="GO:0000266">
    <property type="term" value="P:mitochondrial fission"/>
    <property type="evidence" value="ECO:0000318"/>
    <property type="project" value="GO_Central"/>
</dbReference>
<dbReference type="GO" id="GO:0008053">
    <property type="term" value="P:mitochondrial fusion"/>
    <property type="evidence" value="ECO:0000314"/>
    <property type="project" value="UniProtKB"/>
</dbReference>
<dbReference type="GO" id="GO:0000002">
    <property type="term" value="P:mitochondrial genome maintenance"/>
    <property type="evidence" value="ECO:0000315"/>
    <property type="project" value="UniProtKB"/>
</dbReference>
<dbReference type="GO" id="GO:1990627">
    <property type="term" value="P:mitochondrial inner membrane fusion"/>
    <property type="evidence" value="ECO:0000314"/>
    <property type="project" value="UniProtKB"/>
</dbReference>
<dbReference type="GO" id="GO:0007005">
    <property type="term" value="P:mitochondrion organization"/>
    <property type="evidence" value="ECO:0000315"/>
    <property type="project" value="MGI"/>
</dbReference>
<dbReference type="GO" id="GO:0043066">
    <property type="term" value="P:negative regulation of apoptotic process"/>
    <property type="evidence" value="ECO:0000314"/>
    <property type="project" value="UniProtKB"/>
</dbReference>
<dbReference type="GO" id="GO:1902236">
    <property type="term" value="P:negative regulation of endoplasmic reticulum stress-induced intrinsic apoptotic signaling pathway"/>
    <property type="evidence" value="ECO:0000316"/>
    <property type="project" value="ParkinsonsUK-UCL"/>
</dbReference>
<dbReference type="GO" id="GO:0090201">
    <property type="term" value="P:negative regulation of release of cytochrome c from mitochondria"/>
    <property type="evidence" value="ECO:0000315"/>
    <property type="project" value="UniProtKB"/>
</dbReference>
<dbReference type="GO" id="GO:0001843">
    <property type="term" value="P:neural tube closure"/>
    <property type="evidence" value="ECO:0007669"/>
    <property type="project" value="Ensembl"/>
</dbReference>
<dbReference type="GO" id="GO:0016559">
    <property type="term" value="P:peroxisome fission"/>
    <property type="evidence" value="ECO:0000318"/>
    <property type="project" value="GO_Central"/>
</dbReference>
<dbReference type="GO" id="GO:0032740">
    <property type="term" value="P:positive regulation of interleukin-17 production"/>
    <property type="evidence" value="ECO:0000250"/>
    <property type="project" value="UniProtKB"/>
</dbReference>
<dbReference type="GO" id="GO:2000330">
    <property type="term" value="P:positive regulation of T-helper 17 cell lineage commitment"/>
    <property type="evidence" value="ECO:0000250"/>
    <property type="project" value="UniProtKB"/>
</dbReference>
<dbReference type="GO" id="GO:0051259">
    <property type="term" value="P:protein complex oligomerization"/>
    <property type="evidence" value="ECO:0000314"/>
    <property type="project" value="UniProtKB"/>
</dbReference>
<dbReference type="GO" id="GO:0007601">
    <property type="term" value="P:visual perception"/>
    <property type="evidence" value="ECO:0000315"/>
    <property type="project" value="UniProtKB"/>
</dbReference>
<dbReference type="CDD" id="cd08771">
    <property type="entry name" value="DLP_1"/>
    <property type="match status" value="1"/>
</dbReference>
<dbReference type="FunFam" id="3.40.50.300:FF:000171">
    <property type="entry name" value="Dynamin-like 120 kDa protein, mitochondrial"/>
    <property type="match status" value="1"/>
</dbReference>
<dbReference type="Gene3D" id="3.40.50.300">
    <property type="entry name" value="P-loop containing nucleotide triphosphate hydrolases"/>
    <property type="match status" value="1"/>
</dbReference>
<dbReference type="InterPro" id="IPR022812">
    <property type="entry name" value="Dynamin"/>
</dbReference>
<dbReference type="InterPro" id="IPR001401">
    <property type="entry name" value="Dynamin_GTPase"/>
</dbReference>
<dbReference type="InterPro" id="IPR045063">
    <property type="entry name" value="Dynamin_N"/>
</dbReference>
<dbReference type="InterPro" id="IPR030381">
    <property type="entry name" value="G_DYNAMIN_dom"/>
</dbReference>
<dbReference type="InterPro" id="IPR045817">
    <property type="entry name" value="OPA1_C"/>
</dbReference>
<dbReference type="InterPro" id="IPR027417">
    <property type="entry name" value="P-loop_NTPase"/>
</dbReference>
<dbReference type="PANTHER" id="PTHR11566">
    <property type="entry name" value="DYNAMIN"/>
    <property type="match status" value="1"/>
</dbReference>
<dbReference type="PANTHER" id="PTHR11566:SF67">
    <property type="entry name" value="DYNAMIN-LIKE 120 KDA PROTEIN, MITOCHONDRIAL"/>
    <property type="match status" value="1"/>
</dbReference>
<dbReference type="Pfam" id="PF00350">
    <property type="entry name" value="Dynamin_N"/>
    <property type="match status" value="1"/>
</dbReference>
<dbReference type="Pfam" id="PF19434">
    <property type="entry name" value="OPA1_C"/>
    <property type="match status" value="1"/>
</dbReference>
<dbReference type="PRINTS" id="PR00195">
    <property type="entry name" value="DYNAMIN"/>
</dbReference>
<dbReference type="SMART" id="SM00053">
    <property type="entry name" value="DYNc"/>
    <property type="match status" value="1"/>
</dbReference>
<dbReference type="SUPFAM" id="SSF52540">
    <property type="entry name" value="P-loop containing nucleoside triphosphate hydrolases"/>
    <property type="match status" value="1"/>
</dbReference>
<dbReference type="PROSITE" id="PS51718">
    <property type="entry name" value="G_DYNAMIN_2"/>
    <property type="match status" value="1"/>
</dbReference>
<feature type="transit peptide" description="Mitochondrion" evidence="3">
    <location>
        <begin position="1"/>
        <end position="87"/>
    </location>
</feature>
<feature type="chain" id="PRO_0000007397" description="Dynamin-like GTPase OPA1, long form">
    <location>
        <begin position="88"/>
        <end position="960"/>
    </location>
</feature>
<feature type="chain" id="PRO_0000253479" description="Dynamin-like GTPase OPA1, short form" evidence="69">
    <location>
        <begin position="195"/>
        <end position="960"/>
    </location>
</feature>
<feature type="topological domain" description="Mitochondrial matrix" evidence="72 73">
    <location>
        <begin position="88"/>
        <end position="96"/>
    </location>
</feature>
<feature type="transmembrane region" description="Helical" evidence="4">
    <location>
        <begin position="97"/>
        <end position="113"/>
    </location>
</feature>
<feature type="topological domain" description="Mitochondrial intermembrane" evidence="72 73">
    <location>
        <begin position="114"/>
        <end position="770"/>
    </location>
</feature>
<feature type="intramembrane region" evidence="56 57">
    <location>
        <begin position="771"/>
        <end position="781"/>
    </location>
</feature>
<feature type="topological domain" description="Mitochondrial intermembrane" evidence="72 73">
    <location>
        <begin position="782"/>
        <end position="960"/>
    </location>
</feature>
<feature type="domain" description="Dynamin-type G" evidence="5">
    <location>
        <begin position="285"/>
        <end position="561"/>
    </location>
</feature>
<feature type="region of interest" description="G1 motif" evidence="5">
    <location>
        <begin position="295"/>
        <end position="302"/>
    </location>
</feature>
<feature type="region of interest" description="G2 motif" evidence="5">
    <location>
        <begin position="321"/>
        <end position="324"/>
    </location>
</feature>
<feature type="region of interest" description="G3 motif" evidence="5">
    <location>
        <begin position="398"/>
        <end position="401"/>
    </location>
</feature>
<feature type="region of interest" description="G4 motif" evidence="5">
    <location>
        <begin position="467"/>
        <end position="470"/>
    </location>
</feature>
<feature type="region of interest" description="G5 motif" evidence="5">
    <location>
        <begin position="501"/>
        <end position="504"/>
    </location>
</feature>
<feature type="region of interest" description="Stalk region" evidence="72 73">
    <location>
        <begin position="589"/>
        <end position="836"/>
    </location>
</feature>
<feature type="region of interest" description="Paddle region" evidence="72 73">
    <location>
        <begin position="736"/>
        <end position="856"/>
    </location>
</feature>
<feature type="region of interest" description="Stalk region" evidence="72 73">
    <location>
        <begin position="874"/>
        <end position="928"/>
    </location>
</feature>
<feature type="coiled-coil region" evidence="4">
    <location>
        <begin position="210"/>
        <end position="254"/>
    </location>
</feature>
<feature type="coiled-coil region" evidence="4">
    <location>
        <begin position="895"/>
        <end position="960"/>
    </location>
</feature>
<feature type="binding site" evidence="70 75">
    <location>
        <position position="298"/>
    </location>
    <ligand>
        <name>GTP</name>
        <dbReference type="ChEBI" id="CHEBI:37565"/>
    </ligand>
</feature>
<feature type="binding site" evidence="70 75">
    <location>
        <position position="300"/>
    </location>
    <ligand>
        <name>GTP</name>
        <dbReference type="ChEBI" id="CHEBI:37565"/>
    </ligand>
</feature>
<feature type="binding site" evidence="70 75">
    <location>
        <position position="301"/>
    </location>
    <ligand>
        <name>GTP</name>
        <dbReference type="ChEBI" id="CHEBI:37565"/>
    </ligand>
</feature>
<feature type="binding site" evidence="70 73 75 78">
    <location>
        <position position="302"/>
    </location>
    <ligand>
        <name>GTP</name>
        <dbReference type="ChEBI" id="CHEBI:37565"/>
    </ligand>
</feature>
<feature type="binding site" evidence="70 75">
    <location>
        <position position="302"/>
    </location>
    <ligand>
        <name>Mg(2+)</name>
        <dbReference type="ChEBI" id="CHEBI:18420"/>
    </ligand>
</feature>
<feature type="binding site" evidence="70 73 75 78">
    <location>
        <position position="303"/>
    </location>
    <ligand>
        <name>GTP</name>
        <dbReference type="ChEBI" id="CHEBI:37565"/>
    </ligand>
</feature>
<feature type="binding site" evidence="70 75">
    <location>
        <position position="317"/>
    </location>
    <ligand>
        <name>GTP</name>
        <dbReference type="ChEBI" id="CHEBI:37565"/>
    </ligand>
</feature>
<feature type="binding site" evidence="70 75">
    <location>
        <position position="323"/>
    </location>
    <ligand>
        <name>Mg(2+)</name>
        <dbReference type="ChEBI" id="CHEBI:18420"/>
    </ligand>
</feature>
<feature type="binding site" evidence="70 75">
    <location>
        <position position="398"/>
    </location>
    <ligand>
        <name>Mg(2+)</name>
        <dbReference type="ChEBI" id="CHEBI:18420"/>
    </ligand>
</feature>
<feature type="binding site" evidence="70 75">
    <location>
        <position position="468"/>
    </location>
    <ligand>
        <name>GTP</name>
        <dbReference type="ChEBI" id="CHEBI:37565"/>
    </ligand>
</feature>
<feature type="binding site" evidence="70 75">
    <location>
        <position position="470"/>
    </location>
    <ligand>
        <name>GTP</name>
        <dbReference type="ChEBI" id="CHEBI:37565"/>
    </ligand>
</feature>
<feature type="binding site" evidence="70 75">
    <location>
        <position position="503"/>
    </location>
    <ligand>
        <name>GTP</name>
        <dbReference type="ChEBI" id="CHEBI:37565"/>
    </ligand>
</feature>
<feature type="binding site" evidence="73 78">
    <location>
        <position position="506"/>
    </location>
    <ligand>
        <name>GTP</name>
        <dbReference type="ChEBI" id="CHEBI:37565"/>
    </ligand>
</feature>
<feature type="binding site" evidence="73 78">
    <location>
        <position position="507"/>
    </location>
    <ligand>
        <name>GTP</name>
        <dbReference type="ChEBI" id="CHEBI:37565"/>
    </ligand>
</feature>
<feature type="site" description="Cleavage at site S1" evidence="3">
    <location>
        <begin position="194"/>
        <end position="195"/>
    </location>
</feature>
<feature type="modified residue" description="N6-acetyllysine" evidence="84">
    <location>
        <position position="228"/>
    </location>
</feature>
<feature type="disulfide bond" evidence="52 57 76 77 78 79 80 81 82 83">
    <location>
        <begin position="856"/>
        <end position="874"/>
    </location>
</feature>
<feature type="splice variant" id="VSP_059072" description="In isoform 3 and isoform 7.">
    <location>
        <begin position="150"/>
        <end position="185"/>
    </location>
</feature>
<feature type="splice variant" id="VSP_059073" description="In isoform 4 and isoform 5.">
    <original>G</original>
    <variation>GHKLVSEVIGASDLLLLLG</variation>
    <location>
        <position position="186"/>
    </location>
</feature>
<feature type="splice variant" id="VSP_059074" description="In isoform 3 and isoform 4.">
    <original>F</original>
    <variation>FRKGLLGELILLQQQIQEHEEEARRAAGQYSTSYAQQK</variation>
    <location>
        <position position="206"/>
    </location>
</feature>
<feature type="splice variant" id="VSP_021035" description="In isoform 2." evidence="66">
    <original>V</original>
    <variation>GLLGELILLQQQIQEHEEEARRAAGQYSTSYAQQKRKV</variation>
    <location>
        <position position="209"/>
    </location>
</feature>
<feature type="sequence variant" id="VAR_060825" description="In OPA1; uncertain significance; dbSNP:rs794726939." evidence="19">
    <original>A</original>
    <variation>S</variation>
    <location>
        <position position="8"/>
    </location>
</feature>
<feature type="sequence variant" id="VAR_022923" description="In OPA1." evidence="11">
    <location>
        <begin position="38"/>
        <end position="43"/>
    </location>
</feature>
<feature type="sequence variant" id="VAR_060826" description="In OPA1; dbSNP:rs151103940." evidence="19">
    <original>Y</original>
    <variation>C</variation>
    <location>
        <position position="80"/>
    </location>
</feature>
<feature type="sequence variant" id="VAR_060827" description="In OPA1; dbSNP:rs201214736." evidence="28">
    <original>T</original>
    <variation>M</variation>
    <location>
        <position position="95"/>
    </location>
</feature>
<feature type="sequence variant" id="VAR_060828" description="In OPA1; dbSNP:rs530896300." evidence="28">
    <original>Y</original>
    <variation>C</variation>
    <location>
        <position position="102"/>
    </location>
</feature>
<feature type="sequence variant" id="VAR_022924" description="In dbSNP:rs7624750." evidence="8 9 11 14 16 19 58">
    <original>S</original>
    <variation>N</variation>
    <location>
        <position position="158"/>
    </location>
</feature>
<feature type="sequence variant" id="VAR_022925" description="In dbSNP:rs754177232." evidence="11">
    <original>P</original>
    <variation>L</variation>
    <location>
        <position position="167"/>
    </location>
</feature>
<feature type="sequence variant" id="VAR_022926" description="In dbSNP:rs34307082." evidence="8 11 19">
    <original>A</original>
    <variation>V</variation>
    <location>
        <position position="192"/>
    </location>
</feature>
<feature type="sequence variant" id="VAR_060829" description="In OPA1." evidence="8">
    <original>E</original>
    <variation>K</variation>
    <location>
        <position position="270"/>
    </location>
</feature>
<feature type="sequence variant" id="VAR_060830" description="In OPA1; dbSNP:rs2109011461." evidence="13">
    <original>L</original>
    <variation>P</variation>
    <location>
        <position position="272"/>
    </location>
</feature>
<feature type="sequence variant" id="VAR_060831" description="In OPA1." evidence="8">
    <original>D</original>
    <variation>A</variation>
    <location>
        <position position="273"/>
    </location>
</feature>
<feature type="sequence variant" id="VAR_011483" description="In OPA1; dbSNP:rs121908375." evidence="7 8 9 10">
    <original>R</original>
    <variation>Q</variation>
    <location>
        <position position="290"/>
    </location>
</feature>
<feature type="sequence variant" id="VAR_060832" description="In OPA1; dbSNP:rs780333963." evidence="8">
    <original>R</original>
    <variation>W</variation>
    <location>
        <position position="290"/>
    </location>
</feature>
<feature type="sequence variant" id="VAR_060833" description="In OPA1." evidence="28">
    <location>
        <begin position="293"/>
        <end position="294"/>
    </location>
</feature>
<feature type="sequence variant" id="VAR_011484" description="In OPA1; abolishes GTPase activity without affecting the ability to bind membranes; loss of function in promoting mitochondrial fusion; dbSNP:rs28939082." evidence="6 9 32 50">
    <original>G</original>
    <variation>E</variation>
    <location>
        <position position="300"/>
    </location>
</feature>
<feature type="sequence variant" id="VAR_060834" description="In OPA1; dbSNP:rs770966290." evidence="28">
    <original>Q</original>
    <variation>R</variation>
    <location>
        <position position="310"/>
    </location>
</feature>
<feature type="sequence variant" id="VAR_060835" description="In OPA1." evidence="16">
    <location>
        <begin position="324"/>
        <end position="326"/>
    </location>
</feature>
<feature type="sequence variant" id="VAR_072125" description="In OPA1." evidence="41">
    <original>T</original>
    <variation>S</variation>
    <location>
        <position position="330"/>
    </location>
</feature>
<feature type="sequence variant" id="VAR_060836" description="In DOA+ and OPA1; dbSNP:rs190223702." evidence="24 28">
    <original>A</original>
    <variation>T</variation>
    <location>
        <position position="357"/>
    </location>
</feature>
<feature type="sequence variant" id="VAR_072126" description="In OPA1; dbSNP:rs780922750." evidence="41">
    <original>V</original>
    <variation>I</variation>
    <location>
        <position position="377"/>
    </location>
</feature>
<feature type="sequence variant" id="VAR_060837" description="In OPA1 and BEHRS; dbSNP:rs143319805." evidence="28 37 44">
    <original>I</original>
    <variation>M</variation>
    <location>
        <position position="382"/>
    </location>
</feature>
<feature type="sequence variant" id="VAR_060838" description="In OPA1." evidence="9">
    <original>L</original>
    <variation>F</variation>
    <location>
        <position position="384"/>
    </location>
</feature>
<feature type="sequence variant" id="VAR_060839" description="In OPA1; dbSNP:rs727504060." evidence="28">
    <original>L</original>
    <variation>P</variation>
    <location>
        <position position="396"/>
    </location>
</feature>
<feature type="sequence variant" id="VAR_022927" description="In OPA1; dbSNP:rs727504060." evidence="11">
    <original>L</original>
    <variation>R</variation>
    <location>
        <position position="396"/>
    </location>
</feature>
<feature type="sequence variant" id="VAR_067355" description="In OPA1." evidence="38">
    <original>P</original>
    <variation>A</variation>
    <location>
        <position position="400"/>
    </location>
</feature>
<feature type="sequence variant" id="VAR_075903" description="In BEHRS; dbSNP:rs879255594." evidence="43">
    <original>V</original>
    <variation>M</variation>
    <location>
        <position position="402"/>
    </location>
</feature>
<feature type="sequence variant" id="VAR_060840" description="In OPA1." evidence="28">
    <location>
        <begin position="429"/>
        <end position="430"/>
    </location>
</feature>
<feature type="sequence variant" id="VAR_060841" description="In OPA1." evidence="28">
    <original>N</original>
    <variation>D</variation>
    <location>
        <position position="430"/>
    </location>
</feature>
<feature type="sequence variant" id="VAR_011485" description="In OPA1." evidence="7 11">
    <location>
        <position position="432"/>
    </location>
</feature>
<feature type="sequence variant" id="VAR_060842" description="In OPA1; dbSNP:rs1734162973." evidence="8">
    <original>D</original>
    <variation>V</variation>
    <location>
        <position position="438"/>
    </location>
</feature>
<feature type="sequence variant" id="VAR_072127" description="In DOA+ and OPA1; decreased GTPase activity; loss of function in promoting mitochondrial fusion; dbSNP:rs387906900." evidence="24 26 32">
    <original>G</original>
    <variation>V</variation>
    <location>
        <position position="439"/>
    </location>
</feature>
<feature type="sequence variant" id="VAR_015741" description="In DOA+ and OPA1; decreased GTPase activity; loss of function in promoting mitochondrial fusion; dbSNP:rs80356529." evidence="12 15 17 24 32">
    <original>R</original>
    <variation>H</variation>
    <location>
        <position position="445"/>
    </location>
</feature>
<feature type="sequence variant" id="VAR_072128" description="In DOA+." evidence="40">
    <original>T</original>
    <variation>P</variation>
    <location>
        <position position="449"/>
    </location>
</feature>
<feature type="sequence variant" id="VAR_060843" description="In OPA1; dbSNP:rs1577244261." evidence="28">
    <original>T</original>
    <variation>R</variation>
    <location>
        <position position="449"/>
    </location>
</feature>
<feature type="sequence variant" id="VAR_072129" description="In OPA1." evidence="39">
    <original>G</original>
    <variation>E</variation>
    <location>
        <position position="459"/>
    </location>
</feature>
<feature type="sequence variant" id="VAR_060844" description="In OPA1." evidence="28">
    <original>I</original>
    <variation>IFIF</variation>
    <location>
        <position position="463"/>
    </location>
</feature>
<feature type="sequence variant" id="VAR_060845" description="In OPA1." evidence="8">
    <original>K</original>
    <variation>E</variation>
    <location>
        <position position="468"/>
    </location>
</feature>
<feature type="sequence variant" id="VAR_060846" description="In OPA1." evidence="13">
    <original>D</original>
    <variation>G</variation>
    <location>
        <position position="470"/>
    </location>
</feature>
<feature type="sequence variant" id="VAR_060847" description="In OPA1 and BEHRS." evidence="28 43">
    <original>E</original>
    <variation>K</variation>
    <location>
        <position position="487"/>
    </location>
</feature>
<feature type="sequence variant" id="VAR_072130" evidence="30">
    <original>V</original>
    <variation>G</variation>
    <location>
        <position position="502"/>
    </location>
</feature>
<feature type="sequence variant" id="VAR_022928" description="In OPA1." evidence="9 11">
    <original>T</original>
    <variation>K</variation>
    <location>
        <position position="503"/>
    </location>
</feature>
<feature type="sequence variant" id="VAR_060848" description="In OPA1." evidence="9">
    <original>K</original>
    <variation>N</variation>
    <location>
        <position position="505"/>
    </location>
</feature>
<feature type="sequence variant" id="VAR_075904" description="In MTDPS14; dbSNP:rs869312995." evidence="45">
    <original>L</original>
    <variation>R</variation>
    <location>
        <position position="534"/>
    </location>
</feature>
<feature type="sequence variant" id="VAR_026533" description="In DOA+ and OPA1; decreased GTPase activity; loss of function in promoting mitochondrial fusion; dbSNP:rs398124298." evidence="18 23 24 28 32">
    <original>S</original>
    <variation>R</variation>
    <location>
        <position position="545"/>
    </location>
</feature>
<feature type="sequence variant" id="VAR_060849" evidence="8">
    <original>D</original>
    <variation>N</variation>
    <location>
        <position position="550"/>
    </location>
</feature>
<feature type="sequence variant" id="VAR_060851" description="In OPA1 and DOA+; dbSNP:rs879255592." evidence="28 35">
    <original>C</original>
    <variation>Y</variation>
    <location>
        <position position="551"/>
    </location>
</feature>
<feature type="sequence variant" id="VAR_060850" description="In OPA1." evidence="8">
    <location>
        <position position="551"/>
    </location>
</feature>
<feature type="sequence variant" id="VAR_022929" description="In OPA1; dbSNP:rs140606054." evidence="11">
    <original>R</original>
    <variation>H</variation>
    <location>
        <position position="571"/>
    </location>
</feature>
<feature type="sequence variant" id="VAR_060852" description="In OPA1; dbSNP:rs1711513392." evidence="13">
    <original>L</original>
    <variation>P</variation>
    <location>
        <position position="574"/>
    </location>
</feature>
<feature type="sequence variant" id="VAR_060853" description="In DOA+; dbSNP:rs121908376." evidence="25">
    <original>Y</original>
    <variation>C</variation>
    <location>
        <position position="582"/>
    </location>
</feature>
<feature type="sequence variant" id="VAR_022930" description="In OPA1." evidence="11">
    <location>
        <begin position="586"/>
        <end position="589"/>
    </location>
</feature>
<feature type="sequence variant" id="VAR_060854" description="In OPA1; dbSNP:rs147077380." evidence="28">
    <original>R</original>
    <variation>Q</variation>
    <location>
        <position position="590"/>
    </location>
</feature>
<feature type="sequence variant" id="VAR_060855" description="In OPA1; dbSNP:rs778998909." evidence="16">
    <original>R</original>
    <variation>W</variation>
    <location>
        <position position="590"/>
    </location>
</feature>
<feature type="sequence variant" id="VAR_060856" description="In OPA1." evidence="28">
    <original>L</original>
    <variation>P</variation>
    <location>
        <position position="593"/>
    </location>
</feature>
<feature type="sequence variant" id="VAR_072131" description="In OPA1." evidence="30">
    <location>
        <position position="593"/>
    </location>
</feature>
<feature type="sequence variant" id="VAR_060857" description="In OPA1." evidence="28">
    <original>S</original>
    <variation>L</variation>
    <location>
        <position position="646"/>
    </location>
</feature>
<feature type="sequence variant" id="VAR_060858" description="In OPA1." evidence="13">
    <location>
        <begin position="700"/>
        <end position="701"/>
    </location>
</feature>
<feature type="sequence variant" id="VAR_060859" description="In OPA1; loss of function in promoting mitochondrial fusion; dbSNP:rs1292852465." evidence="16 32">
    <original>N</original>
    <variation>K</variation>
    <location>
        <position position="728"/>
    </location>
</feature>
<feature type="sequence variant" id="VAR_060860" description="In OPA1." evidence="28">
    <original>G</original>
    <variation>D</variation>
    <location>
        <position position="768"/>
    </location>
</feature>
<feature type="sequence variant" id="VAR_060861" description="In OPA1; dbSNP:rs190235251." evidence="28">
    <original>R</original>
    <variation>W</variation>
    <location>
        <position position="781"/>
    </location>
</feature>
<feature type="sequence variant" id="VAR_060862" description="In OPA1; loss of lipid binding and partial loss of function in promoting mitochondrial fusion; dbSNP:rs1064797302." evidence="8 10 32">
    <original>Q</original>
    <variation>R</variation>
    <location>
        <position position="785"/>
    </location>
</feature>
<feature type="sequence variant" id="VAR_060863" description="In OPA1." evidence="28">
    <original>S</original>
    <variation>Y</variation>
    <location>
        <position position="823"/>
    </location>
</feature>
<feature type="sequence variant" id="VAR_060864" description="In OPA1." evidence="19">
    <original>Y</original>
    <variation>C</variation>
    <location>
        <position position="841"/>
    </location>
</feature>
<feature type="sequence variant" id="VAR_060865" description="In OPA1." evidence="28">
    <original>R</original>
    <variation>L</variation>
    <location>
        <position position="882"/>
    </location>
</feature>
<feature type="sequence variant" id="VAR_060866" description="In OPA1." evidence="28">
    <original>L</original>
    <variation>P</variation>
    <location>
        <position position="887"/>
    </location>
</feature>
<feature type="sequence variant" id="VAR_060867" description="In dbSNP:rs863224138." evidence="9">
    <original>E</original>
    <variation>G</variation>
    <location>
        <position position="907"/>
    </location>
</feature>
<feature type="sequence variant" id="VAR_072132" description="In DOA+; impairs protein folding; loss of function in promoting mitochondrial fusion; dbSNP:rs387906901." evidence="24 32">
    <original>V</original>
    <variation>D</variation>
    <location>
        <position position="910"/>
    </location>
</feature>
<feature type="sequence variant" id="VAR_072133" description="In OPA1." evidence="39">
    <location>
        <position position="910"/>
    </location>
</feature>
<feature type="sequence variant" id="VAR_060868" description="In OPA1; dbSNP:rs145710079." evidence="28 29">
    <original>R</original>
    <variation>C</variation>
    <location>
        <position position="932"/>
    </location>
</feature>
<feature type="sequence variant" id="VAR_028370" description="In OPA1; impairs protein folding; loss of function in promoting mitochondrial fusion." evidence="10 32">
    <original>L</original>
    <variation>P</variation>
    <location>
        <position position="939"/>
    </location>
</feature>
<feature type="sequence variant" id="VAR_060869" description="In OPA1." evidence="28 30">
    <original>L</original>
    <variation>P</variation>
    <location>
        <position position="949"/>
    </location>
</feature>
<feature type="mutagenesis site" description="In interface mutant 9; strongly decreased ability to mediate mitochondrial fusion; when associated with A-217, A-557 and A-565." evidence="57">
    <original>E</original>
    <variation>A</variation>
    <location>
        <position position="213"/>
    </location>
</feature>
<feature type="mutagenesis site" description="In interface mutant 9; strongly decreased ability to mediate mitochondrial fusion; when associated with A-213, A-557 and A-565." evidence="57">
    <original>Q</original>
    <variation>A</variation>
    <location>
        <position position="217"/>
    </location>
</feature>
<feature type="mutagenesis site" description="In interface mutant 8; strongly decreased ability to mediate mitochondrial fusion." evidence="57">
    <original>R</original>
    <variation>A</variation>
    <location>
        <position position="235"/>
    </location>
</feature>
<feature type="mutagenesis site" description="In mutant control 1; does not affect ability to mediate mitochondrial fusion." evidence="57">
    <original>L</original>
    <variation>A</variation>
    <location>
        <position position="243"/>
    </location>
</feature>
<feature type="mutagenesis site" description="In mutant control 2; does not affect ability to mediate mitochondrial fusion." evidence="57">
    <original>L</original>
    <variation>A</variation>
    <location>
        <position position="248"/>
    </location>
</feature>
<feature type="mutagenesis site" description="Abolished GTPase activity without affecting the ability to bind membranes." evidence="50">
    <original>Q</original>
    <variation>E</variation>
    <location>
        <position position="297"/>
    </location>
</feature>
<feature type="mutagenesis site" description="Abolished GTPase activity without affecting the ability to bind membranes." evidence="50 52">
    <original>S</original>
    <variation>A</variation>
    <location>
        <position position="298"/>
    </location>
</feature>
<feature type="mutagenesis site" description="Abolished GTPase activity." evidence="51">
    <original>K</original>
    <variation>A</variation>
    <location>
        <position position="301"/>
    </location>
</feature>
<feature type="mutagenesis site" description="Abolished GTPase activity." evidence="52">
    <original>T</original>
    <variation>A</variation>
    <location>
        <position position="302"/>
    </location>
</feature>
<feature type="mutagenesis site" description="Abolished GTPase activity without affecting the ability to bind membranes." evidence="50">
    <original>T</original>
    <variation>N</variation>
    <location>
        <position position="302"/>
    </location>
</feature>
<feature type="mutagenesis site" description="Strongly decreased GTPase activity." evidence="52">
    <original>R</original>
    <variation>A</variation>
    <location>
        <position position="316"/>
    </location>
</feature>
<feature type="mutagenesis site" description="Decreased GTPase activity." evidence="52">
    <original>E</original>
    <variation>A</variation>
    <location>
        <position position="320"/>
    </location>
</feature>
<feature type="mutagenesis site" description="Strongly decreased GTPase activity." evidence="52">
    <original>M</original>
    <variation>A</variation>
    <location>
        <position position="321"/>
    </location>
</feature>
<feature type="mutagenesis site" description="Decreased GTPase activity." evidence="52">
    <original>M</original>
    <variation>A</variation>
    <location>
        <position position="322"/>
    </location>
</feature>
<feature type="mutagenesis site" description="Abolished GTPase activity." evidence="47 52">
    <original>T</original>
    <variation>A</variation>
    <location>
        <position position="323"/>
    </location>
</feature>
<feature type="mutagenesis site" description="Strongly decreased GTPase activity." evidence="52">
    <original>R</original>
    <variation>A</variation>
    <location>
        <position position="324"/>
    </location>
</feature>
<feature type="mutagenesis site" description="In mutant control 3; does not affect ability to mediate mitochondrial fusion." evidence="57">
    <original>L</original>
    <variation>A</variation>
    <location>
        <position position="359"/>
    </location>
</feature>
<feature type="mutagenesis site" description="Strongly decreased GTPase activity." evidence="52">
    <original>D</original>
    <variation>A</variation>
    <location>
        <position position="398"/>
    </location>
</feature>
<feature type="mutagenesis site" description="In interface mutant 5; strongly decreased ability to mediate mitochondrial fusion." evidence="57">
    <original>E</original>
    <variation>A</variation>
    <location>
        <position position="444"/>
    </location>
</feature>
<feature type="mutagenesis site" description="Decreased GTPase activity." evidence="52">
    <original>T</original>
    <variation>A</variation>
    <location>
        <position position="503"/>
    </location>
</feature>
<feature type="mutagenesis site" description="In interface mutant 9; strongly decreased ability to mediate mitochondrial fusion; when associated with A-213, A-217 and A-565." evidence="57">
    <original>R</original>
    <variation>A</variation>
    <location>
        <position position="557"/>
    </location>
</feature>
<feature type="mutagenesis site" description="In interface mutant 9; strongly decreased ability to mediate mitochondrial fusion; when associated with A-213, A-217 and A-557." evidence="57">
    <original>D</original>
    <variation>A</variation>
    <location>
        <position position="565"/>
    </location>
</feature>
<feature type="mutagenesis site" description="In interface mutant 2; strongly decreased ability to mediate mitochondrial fusion; when associated with A-835." evidence="57">
    <original>KH</original>
    <variation>AA</variation>
    <location>
        <begin position="614"/>
        <end position="615"/>
    </location>
</feature>
<feature type="mutagenesis site" description="In interface mutant 1b; strongly decreased ability to mediate mitochondrial fusion; when associated with A-630, A-668 and A-671." evidence="57">
    <original>E</original>
    <variation>A</variation>
    <location>
        <position position="626"/>
    </location>
</feature>
<feature type="mutagenesis site" description="In interface mutant 1a; strongly decreased ability to mediate mitochondrial fusion; when associated with A-663 and A-683." evidence="57">
    <original>R</original>
    <variation>A</variation>
    <location>
        <position position="627"/>
    </location>
</feature>
<feature type="mutagenesis site" description="In interface mutant 1b; strongly decreased ability to mediate mitochondrial fusion; when associated with A-626, A-668 and A-671." evidence="57">
    <original>T</original>
    <variation>A</variation>
    <location>
        <position position="630"/>
    </location>
</feature>
<feature type="mutagenesis site" description="In interface mutant 1e; strongly decreased ability to mediate mitochondrial fusion." evidence="57">
    <original>H</original>
    <variation>A</variation>
    <location>
        <position position="631"/>
    </location>
</feature>
<feature type="mutagenesis site" description="In mutant control 4; does not affect ability to mediate mitochondrial fusion." evidence="57">
    <original>T</original>
    <variation>A</variation>
    <location>
        <position position="651"/>
    </location>
</feature>
<feature type="mutagenesis site" description="In interface mutant 1c; strongly decreased ability to mediate mitochondrial fusion." evidence="57">
    <original>Q</original>
    <variation>A</variation>
    <location>
        <position position="659"/>
    </location>
</feature>
<feature type="mutagenesis site" description="In interface mutant 1a; strongly decreased ability to mediate mitochondrial fusion; when associated with A-627 and A-683." evidence="57">
    <original>K</original>
    <variation>A</variation>
    <location>
        <position position="663"/>
    </location>
</feature>
<feature type="mutagenesis site" description="In interface mutant 1b; strongly decreased ability to mediate mitochondrial fusion; when associated with A-626, A-630 and A-671." evidence="57">
    <original>K</original>
    <variation>A</variation>
    <location>
        <position position="668"/>
    </location>
</feature>
<feature type="mutagenesis site" description="In interface mutant 1b; strongly decreased ability to mediate mitochondrial fusion; when associated with A-626, A-630 and A-668." evidence="57">
    <original>E</original>
    <variation>A</variation>
    <location>
        <position position="671"/>
    </location>
</feature>
<feature type="mutagenesis site" description="In interface mutant 1a; strongly decreased ability to mediate mitochondrial fusion; when associated with A-627 and A-663." evidence="57">
    <original>R</original>
    <variation>A</variation>
    <location>
        <position position="683"/>
    </location>
</feature>
<feature type="mutagenesis site" description="In interface mutant 6; strongly decreased ability to mediate mitochondrial fusion." evidence="57">
    <original>D</original>
    <variation>A</variation>
    <location>
        <position position="716"/>
    </location>
</feature>
<feature type="mutagenesis site" description="In interface mutant 4b; strongly decreased ability to mediate mitochondrial fusion." evidence="57">
    <original>I</original>
    <variation>A</variation>
    <location>
        <position position="735"/>
    </location>
</feature>
<feature type="mutagenesis site" description="Abolished ability to mediate mitochondrial fusion." evidence="56">
    <original>K</original>
    <variation>E</variation>
    <location>
        <position position="738"/>
    </location>
</feature>
<feature type="mutagenesis site" description="In interface mutant 1d; strongly decreased ability to mediate mitochondrial fusion." evidence="57">
    <original>E</original>
    <variation>A</variation>
    <location>
        <position position="760"/>
    </location>
</feature>
<feature type="mutagenesis site" description="In P-alpha-2 membrane insertion mutant; strongly decreased ability to mediate mitochondrial fusion." evidence="57">
    <original>WKKRWLYWKNR</original>
    <variation>AAAAAAAAAAA</variation>
    <location>
        <begin position="771"/>
        <end position="781"/>
    </location>
</feature>
<feature type="mutagenesis site" description="Abolished ability to bind and bend membranes." evidence="56">
    <original>W</original>
    <variation>A</variation>
    <location>
        <position position="771"/>
    </location>
</feature>
<feature type="mutagenesis site" description="Abolished ability to bind and bend membranes." evidence="56">
    <original>K</original>
    <variation>E</variation>
    <location>
        <position position="772"/>
    </location>
</feature>
<feature type="mutagenesis site" description="Abolished ability to bind and bend membranes." evidence="56">
    <original>R</original>
    <variation>E</variation>
    <location>
        <position position="774"/>
    </location>
</feature>
<feature type="mutagenesis site" description="Does not affect ability to bind and bend membranes." evidence="56">
    <original>W</original>
    <variation>A</variation>
    <location>
        <position position="775"/>
    </location>
</feature>
<feature type="mutagenesis site" description="Decreased ability to mediate mitochondrial fusion." evidence="56">
    <original>K</original>
    <variation>E</variation>
    <location>
        <position position="779"/>
    </location>
</feature>
<feature type="mutagenesis site" description="Abolished ability to bind and bend membranes." evidence="56">
    <original>R</original>
    <variation>E</variation>
    <location>
        <position position="781"/>
    </location>
</feature>
<feature type="mutagenesis site" description="Decreased ability to bind membranes." evidence="50">
    <original>ELE</original>
    <variation>ALA</variation>
    <location>
        <begin position="794"/>
        <end position="796"/>
    </location>
</feature>
<feature type="mutagenesis site" description="Decreased ability to bind membranes." evidence="50">
    <original>LEKML</original>
    <variation>AKALA</variation>
    <variation>EKELE</variation>
    <location>
        <begin position="795"/>
        <end position="799"/>
    </location>
</feature>
<feature type="mutagenesis site" description="Abolished GTPase activity and ability to bend membranes." evidence="50">
    <original>KMLK</original>
    <variation>AMLA</variation>
    <location>
        <begin position="797"/>
        <end position="800"/>
    </location>
</feature>
<feature type="mutagenesis site" description="In interface mutant 7; strongly decreased ability to mediate mitochondrial fusion." evidence="57">
    <original>KN</original>
    <variation>AA</variation>
    <location>
        <begin position="819"/>
        <end position="820"/>
    </location>
</feature>
<feature type="mutagenesis site" description="Abolished ability to mediate mitochondrial fusion." evidence="56">
    <original>K</original>
    <variation>E</variation>
    <location>
        <position position="819"/>
    </location>
</feature>
<feature type="mutagenesis site" description="In interface mutant 2; strongly decreased ability to mediate mitochondrial fusion; when associated with 614-A-A-615." evidence="57">
    <original>D</original>
    <variation>A</variation>
    <location>
        <position position="835"/>
    </location>
</feature>
<feature type="mutagenesis site" description="Abolished ability to mediate mitochondrial fusion." evidence="56">
    <original>R</original>
    <variation>E</variation>
    <location>
        <position position="858"/>
    </location>
</feature>
<feature type="mutagenesis site" description="In interface mutant 4a; strongly decreased ability to mediate mitochondrial fusion." evidence="57">
    <original>FYYYQRHF</original>
    <variation>AAAAAAAA</variation>
    <location>
        <begin position="860"/>
        <end position="867"/>
    </location>
</feature>
<feature type="helix" evidence="85">
    <location>
        <begin position="264"/>
        <end position="274"/>
    </location>
</feature>
<feature type="strand" evidence="85">
    <location>
        <begin position="281"/>
        <end position="283"/>
    </location>
</feature>
<feature type="strand" evidence="85">
    <location>
        <begin position="291"/>
        <end position="296"/>
    </location>
</feature>
<feature type="helix" evidence="85">
    <location>
        <begin position="301"/>
        <end position="309"/>
    </location>
</feature>
<feature type="strand" evidence="85">
    <location>
        <begin position="327"/>
        <end position="333"/>
    </location>
</feature>
<feature type="strand" evidence="85">
    <location>
        <begin position="338"/>
        <end position="341"/>
    </location>
</feature>
<feature type="helix" evidence="85">
    <location>
        <begin position="353"/>
        <end position="370"/>
    </location>
</feature>
<feature type="strand" evidence="85">
    <location>
        <begin position="382"/>
        <end position="388"/>
    </location>
</feature>
<feature type="strand" evidence="85">
    <location>
        <begin position="394"/>
        <end position="398"/>
    </location>
</feature>
<feature type="helix" evidence="85">
    <location>
        <begin position="414"/>
        <end position="426"/>
    </location>
</feature>
<feature type="strand" evidence="85">
    <location>
        <begin position="432"/>
        <end position="438"/>
    </location>
</feature>
<feature type="helix" evidence="85">
    <location>
        <begin position="443"/>
        <end position="445"/>
    </location>
</feature>
<feature type="helix" evidence="85">
    <location>
        <begin position="449"/>
        <end position="455"/>
    </location>
</feature>
<feature type="strand" evidence="85">
    <location>
        <begin position="460"/>
        <end position="467"/>
    </location>
</feature>
<feature type="helix" evidence="85">
    <location>
        <begin position="469"/>
        <end position="475"/>
    </location>
</feature>
<feature type="helix" evidence="85">
    <location>
        <begin position="479"/>
        <end position="486"/>
    </location>
</feature>
<feature type="strand" evidence="85">
    <location>
        <begin position="490"/>
        <end position="492"/>
    </location>
</feature>
<feature type="strand" evidence="85">
    <location>
        <begin position="496"/>
        <end position="500"/>
    </location>
</feature>
<feature type="strand" evidence="85">
    <location>
        <begin position="506"/>
        <end position="508"/>
    </location>
</feature>
<feature type="helix" evidence="85">
    <location>
        <begin position="512"/>
        <end position="524"/>
    </location>
</feature>
<feature type="helix" evidence="85">
    <location>
        <begin position="527"/>
        <end position="530"/>
    </location>
</feature>
<feature type="helix" evidence="85">
    <location>
        <begin position="541"/>
        <end position="559"/>
    </location>
</feature>
<feature type="helix" evidence="85">
    <location>
        <begin position="561"/>
        <end position="571"/>
    </location>
</feature>
<feature type="helix" evidence="85">
    <location>
        <begin position="945"/>
        <end position="956"/>
    </location>
</feature>
<feature type="short sequence motif" description="LQQQIQ motif" evidence="20">
    <location sequence="O60313-2">
        <begin position="217"/>
        <end position="222"/>
    </location>
</feature>
<feature type="sequence variant" id="VAR_082805" description="In OPA1; dbSNP:rs138350727." evidence="27">
    <original>R</original>
    <variation>H</variation>
    <location sequence="O60313-2">
        <position position="229"/>
    </location>
</feature>
<feature type="short sequence motif" description="LQQQIQ motif" evidence="20">
    <location sequence="O60313-9">
        <begin position="181"/>
        <end position="186"/>
    </location>
</feature>
<feature type="short sequence motif" description="LQQQIQ motif" evidence="20">
    <location sequence="O60313-10">
        <begin position="235"/>
        <end position="240"/>
    </location>
</feature>
<feature type="site" description="Cleavage at site S3" evidence="71">
    <location sequence="O60313-10">
        <begin position="201"/>
        <end position="202"/>
    </location>
</feature>
<feature type="site" description="Cleavage at site S3" evidence="71">
    <location sequence="O60313-10">
        <begin position="202"/>
        <end position="203"/>
    </location>
</feature>
<feature type="mutagenesis site" description="Abolished cleavage at position S3." evidence="55">
    <location sequence="O60313-10">
        <begin position="195"/>
        <end position="204"/>
    </location>
</feature>
<feature type="mutagenesis site" description="Abolished cleavage at position S3." evidence="55">
    <location sequence="O60313-10">
        <begin position="200"/>
        <end position="204"/>
    </location>
</feature>
<feature type="site" description="Cleavage at site S3" evidence="71">
    <location sequence="O60313-11">
        <begin position="201"/>
        <end position="202"/>
    </location>
</feature>
<feature type="site" description="Cleavage at site S3" evidence="71">
    <location sequence="O60313-11">
        <begin position="202"/>
        <end position="203"/>
    </location>
</feature>
<feature type="mutagenesis site" description="Abolished cleavage at position S3." evidence="34">
    <location sequence="O60313-11">
        <begin position="195"/>
        <end position="204"/>
    </location>
</feature>
<feature type="mutagenesis site" description="Abolished cleavage at position S3." evidence="34">
    <location sequence="O60313-11">
        <begin position="200"/>
        <end position="204"/>
    </location>
</feature>
<accession>O60313</accession>
<accession>D3DNW4</accession>
<accession>E5KLJ5</accession>
<accession>E5KLJ6</accession>
<accession>E5KLJ7</accession>
<accession>E5KLK1</accession>
<accession>E5KLK2</accession>
<gene>
    <name evidence="60 63 74" type="primary">OPA1</name>
    <name evidence="65" type="synonym">KIAA0567</name>
</gene>
<name>OPA1_HUMAN</name>
<comment type="function">
    <text evidence="2 20 22 24 31 32 33 42 47 48 49 50 53 54 55 56 57">Dynamin-related GTPase that is essential for normal mitochondrial morphology by mediating fusion of the mitochondrial inner membranes, regulating cristae morphology and maintaining respiratory chain function (PubMed:16778770, PubMed:17709429, PubMed:20185555, PubMed:24616225, PubMed:28628083, PubMed:28746876, PubMed:31922487, PubMed:32228866, PubMed:32567732, PubMed:33130824, PubMed:33237841, PubMed:37612504, PubMed:37612506). Exists in two forms: the transmembrane, long form (Dynamin-like GTPase OPA1, long form; L-OPA1), which is tethered to the inner mitochondrial membrane, and the short soluble form (Dynamin-like GTPase OPA1, short form; S-OPA1), which results from proteolytic cleavage and localizes in the intermembrane space (PubMed:31922487, PubMed:32228866, PubMed:33237841, PubMed:37612504, PubMed:37612506). Both forms (L-OPA1 and S-OPA1) cooperate to catalyze the fusion of the mitochondrial inner membrane (PubMed:31922487, PubMed:37612504, PubMed:37612506). The equilibrium between L-OPA1 and S-OPA1 is essential: excess levels of S-OPA1, produced by cleavage by OMA1 following loss of mitochondrial membrane potential, lead to an impaired equilibrium between L-OPA1 and S-OPA1, inhibiting mitochondrial fusion (PubMed:20038677, PubMed:31922487). The balance between L-OPA1 and S-OPA1 also influences cristae shape and morphology (By similarity). Involved in remodeling cristae and the release of cytochrome c during apoptosis (By similarity). Proteolytic processing by PARL in response to intrinsic apoptotic signals may lead to disassembly of OPA1 oligomers and release of the caspase activator cytochrome C (CYCS) into the mitochondrial intermembrane space (By similarity). Acts as a regulator of T-helper Th17 cells, which are characterized by cells with fused mitochondria with tight cristae, by mediating mitochondrial membrane remodeling: OPA1 is required for interleukin-17 (IL-17) production (By similarity). Its role in mitochondrial morphology is required for mitochondrial genome maintenance (PubMed:18158317, PubMed:20974897).</text>
</comment>
<comment type="function">
    <molecule>Dynamin-like GTPase OPA1, long form</molecule>
    <text evidence="1 2 47 49 50 53 54 56 57">Constitutes the transmembrane long form (L-OPA1) that plays a central role in mitochondrial inner membrane fusion and cristae morphology (PubMed:31922487, PubMed:32228866, PubMed:37612504, PubMed:37612506). L-OPA1 and the soluble short form (S-OPA1) form higher-order helical assemblies that coordinate the fusion of mitochondrial inner membranes (PubMed:31922487, PubMed:37612504, PubMed:37612506). Inner membrane-anchored L-OPA1 molecules initiate membrane remodeling by recruiting soluble S-OPA1 to rapidly polymerize into a flexible cylindrical scaffold encaging the mitochondrial inner membrane (PubMed:37612504, PubMed:37612506). Once at the membrane surface, the formation of S-OPA1 helices induce bilayer curvature (PubMed:37612504, PubMed:37612506). OPA1 dimerization through the paddle region, which inserts into cardiolipin-containing membrane, promotes GTP hydrolysis and the helical assembly of a flexible OPA1 lattice on the membrane, which drives membrane curvature and mitochondrial fusion (PubMed:28628083, PubMed:37612504, PubMed:37612506). Plays a role in the maintenance and remodeling of mitochondrial cristae, some invaginations of the mitochondrial inner membrane that provide an increase in the surface area (PubMed:32567732, PubMed:33130824). Probably acts by forming helical filaments at the inside of inner membrane tubes with the shape and dimensions of crista junctions (By similarity). The equilibrium between L-OPA1 and S-OPA1 influences cristae shape and morphology: increased L-OPA1 levels promote cristae stacking and elongated mitochondria, while increased S-OPA1 levels correlated with irregular cristae packing and round mitochondria shape (By similarity).</text>
</comment>
<comment type="function">
    <molecule>Dynamin-like GTPase OPA1, short form</molecule>
    <text evidence="1 2 31 47 49 50 51 56 57">Constitutes the soluble short form (S-OPA1) generated by cleavage by OMA1, which plays a central role in mitochondrial inner membrane fusion and cristae morphology (PubMed:31922487, PubMed:32228866, PubMed:32245890, PubMed:37612504, PubMed:37612506). The transmembrane long form (L-OPA1) and the S-OPA1 form higher-order helical assemblies that coordinate the fusion of mitochondrial inner membranes (PubMed:31922487, PubMed:32228866, PubMed:37612504, PubMed:37612506). Inner membrane-anchored L-OPA1 molecules initiate membrane remodeling by recruiting soluble S-OPA1 to rapidly polymerize into a flexible cylindrical scaffold encaging the mitochondrial inner membrane (PubMed:32228866, PubMed:37612504, PubMed:37612506). Once at the membrane surface, the formation of S-OPA1 helices induce bilayer curvature (PubMed:37612504, PubMed:37612506). OPA1 dimerization through the paddle region, which inserts into cardiolipin-containing membrane, promotes GTP hydrolysis and the helical assembly of a flexible OPA1 lattice on the membrane, which drives membrane curvature and mitochondrial fusion (PubMed:28628083, PubMed:37612504, PubMed:37612506). Excess levels of S-OPA1 produced by cleavage by OMA1 following stress conditions that induce loss of mitochondrial membrane potential, lead to an impaired equilibrium between L-OPA1 and S-OPA1, thereby inhibiting mitochondrial fusion (PubMed:20038677). Involved in mitochondrial safeguard in response to transient mitochondrial membrane depolarization by mediating flickering: cleavage by OMA1 leads to excess production of S-OPA1, preventing mitochondrial hyperfusion (By similarity). Plays a role in the maintenance and remodeling of mitochondrial cristae, some invaginations of the mitochondrial inner membrane that provide an increase in the surface area (PubMed:32245890). Probably acts by forming helical filaments at the inside of inner membrane tubes with the shape and dimensions of crista junctions (By similarity). The equilibrium between L-OPA1 and S-OPA1 influences cristae shape and morphology: increased L-OPA1 levels promote cristae stacking and elongated mitochondria, while increased S-OPA1 levels correlated with irregular cristae packing and round mitochondria shape (By similarity).</text>
</comment>
<comment type="function">
    <molecule>Isoform 1</molecule>
    <text evidence="22">Coexpression of isoform 1 with shorter alternative products is required for optimal activity in promoting mitochondrial fusion.</text>
</comment>
<comment type="function">
    <molecule>Isoform 4</molecule>
    <text evidence="33">Isoforms that contain the alternative exon 4b are required for mitochondrial genome maintenance, possibly by anchoring the mitochondrial nucleoids to the inner mitochondrial membrane.</text>
</comment>
<comment type="function">
    <molecule>Isoform 5</molecule>
    <text evidence="33">Isoforms that contain the alternative exon 4b are required for mitochondrial genome maintenance, possibly by anchoring the mitochondrial nucleoids to the inner mitochondrial membrane.</text>
</comment>
<comment type="catalytic activity">
    <reaction evidence="32 47 48 50 51 52 56 57">
        <text>GTP + H2O = GDP + phosphate + H(+)</text>
        <dbReference type="Rhea" id="RHEA:19669"/>
        <dbReference type="ChEBI" id="CHEBI:15377"/>
        <dbReference type="ChEBI" id="CHEBI:15378"/>
        <dbReference type="ChEBI" id="CHEBI:37565"/>
        <dbReference type="ChEBI" id="CHEBI:43474"/>
        <dbReference type="ChEBI" id="CHEBI:58189"/>
        <dbReference type="EC" id="3.6.5.5"/>
    </reaction>
</comment>
<comment type="activity regulation">
    <text evidence="48">Activated by guanine nucleotide exchange factor RCC1L.</text>
</comment>
<comment type="subunit">
    <text evidence="32 34 36 48 56 57">Oligomeric complex consisting of membrane-bound and soluble forms of OPA1 (PubMed:20185555, PubMed:37612504, PubMed:37612506). Interacts with RCC1L; RCC1L acts as a guanine nucleotide exchange factor (GEF) for OPA1 by exchanging bound GDP for free GTP (PubMed:28746876). Interacts with CHCHD3 and IMMT; these interactions occur preferentially with soluble OPA1 forms (PubMed:21081504). Interacts with PRELID1 (PubMed:21364629).</text>
</comment>
<comment type="interaction">
    <interactant intactId="EBI-1054131">
        <id>O60313</id>
    </interactant>
    <interactant intactId="EBI-749464">
        <id>Q12983</id>
        <label>BNIP3</label>
    </interactant>
    <organismsDiffer>false</organismsDiffer>
    <experiments>10</experiments>
</comment>
<comment type="interaction">
    <interactant intactId="EBI-1054131">
        <id>O60313</id>
    </interactant>
    <interactant intactId="EBI-5323863">
        <id>Q5S007</id>
        <label>LRRK2</label>
    </interactant>
    <organismsDiffer>false</organismsDiffer>
    <experiments>5</experiments>
</comment>
<comment type="interaction">
    <interactant intactId="EBI-1054131">
        <id>O60313</id>
    </interactant>
    <interactant intactId="EBI-724621">
        <id>Q9NTG7</id>
        <label>SIRT3</label>
    </interactant>
    <organismsDiffer>false</organismsDiffer>
    <experiments>3</experiments>
</comment>
<comment type="subcellular location">
    <molecule>Dynamin-like GTPase OPA1, long form</molecule>
    <subcellularLocation>
        <location evidence="6 20 33 48 56 57">Mitochondrion inner membrane</location>
        <topology evidence="4">Single-pass membrane protein</topology>
    </subcellularLocation>
    <text evidence="42">Detected at contact sites between endoplasmic reticulum and mitochondrion membranes.</text>
</comment>
<comment type="subcellular location">
    <molecule>Dynamin-like GTPase OPA1, short form</molecule>
    <subcellularLocation>
        <location evidence="50 56 57">Mitochondrion intermembrane space</location>
    </subcellularLocation>
</comment>
<comment type="alternative products">
    <event type="alternative splicing"/>
    <isoform>
        <id>O60313-1</id>
        <name>1</name>
        <name>6</name>
        <name evidence="62">Sp1</name>
        <sequence type="displayed"/>
    </isoform>
    <isoform>
        <id>O60313-2</id>
        <name>2</name>
        <name evidence="61">7</name>
        <name evidence="62">Sp7</name>
        <sequence type="described" ref="VSP_021035"/>
    </isoform>
    <isoform>
        <id>O60313-9</id>
        <name>3</name>
        <name evidence="62">Sp4</name>
        <sequence type="described" ref="VSP_059072 VSP_059074"/>
    </isoform>
    <isoform>
        <id>O60313-10</id>
        <name>4</name>
        <name evidence="62">Sp8</name>
        <sequence type="described" ref="VSP_059073 VSP_059074"/>
    </isoform>
    <isoform>
        <id>O60313-11</id>
        <name>5</name>
        <name evidence="62">Sp5</name>
        <sequence type="described" ref="VSP_059073"/>
    </isoform>
    <isoform>
        <id>O60313-13</id>
        <name>7</name>
        <name evidence="62">Sp2</name>
        <sequence type="described" ref="VSP_059072"/>
    </isoform>
    <text evidence="67 68">Additional isoforms seem to exist.</text>
</comment>
<comment type="tissue specificity">
    <text evidence="6 7 10">Highly expressed in retina (PubMed:11017079, PubMed:11017080, PubMed:11810270). Also expressed in brain, testis, heart and skeletal muscle (PubMed:11810270). Low levels of all isoforms expressed in a variety of tissues (PubMed:11810270).</text>
</comment>
<comment type="tissue specificity">
    <molecule>Isoform 1</molecule>
    <text evidence="10">Expressed in retina, skeletal muscle, heart, lung, ovary, colon, thyroid gland, leukocytes and fetal brain. Low levels of all isoforms expressed in a variety of tissues.</text>
</comment>
<comment type="tissue specificity">
    <molecule>Isoform 2</molecule>
    <text evidence="10">Isoform 2 expressed in colon, liver, kidney, thyroid gland and leukocytes.</text>
</comment>
<comment type="domain">
    <text evidence="32 56 57">The paddle region plays a major role in driving mitochondrial inner membrane fusion (PubMed:37612504, PubMed:37612506). It binds lipid membranes enriched in negatively charged phospholipids, such as cardiolipin, and promotes membrane tubulation (PubMed:20185555, PubMed:37612504, PubMed:37612506). A conserved intramembrane region, named membrane insertion loop (MIL), within the paddle region inserts deeply into the bilayer, further stabilizing the interactions with cardiolipin-enriched membranes (PubMed:37612504, PubMed:37612506). OPA1 dimerization through the paddle domain promotes the helical assembly of a flexible OPA1 lattice on the membrane, driving mitochondrial fusion in cells (PubMed:37612504, PubMed:37612506).</text>
</comment>
<comment type="PTM">
    <text evidence="2 20 21 22 31 42 46 55">Cleaved by OMA1 or YME1L downstream of the transmembrane region in response to different signals to generate soluble forms (PubMed:16778770, PubMed:17709429, PubMed:20038677, PubMed:24616225, PubMed:27495975, PubMed:33237841). Cleaved by OMA1 at position S1 following stress conditions, generating the short soluble form (Dynamin-like GTPase OPA1, short form; S-OPA1) (PubMed:20038677). AFG3L2 is involved in the regulation of OMA1-dependent processing of OPA1 (PubMed:17615298). PARL-dependent proteolytic processing releases an antiapoptotic soluble form not required for mitochondrial fusion (By similarity).</text>
</comment>
<comment type="PTM">
    <molecule>Isoform 2</molecule>
    <text evidence="20 22 42 46">Cleavage at position S2 by YME1L is required to mediate oxidative phosphorylation (OXPHOS)-induced mitochondrial fusion (PubMed:17709429, PubMed:24616225, PubMed:27495975). Cleavage occurs in the sequence motif Leu-Gln-Gln-Gln-Ile-Gln (LQQQIQ) (PubMed:16778770).</text>
</comment>
<comment type="PTM">
    <molecule>Isoform 3</molecule>
    <text evidence="20 22 42 46">Cleavage at position S2 by YME1L is required to mediate oxidative phosphorylation (OXPHOS)-induced mitochondrial fusion (PubMed:17709429, PubMed:24616225, PubMed:27495975). Cleavage occurs in the sequence motif Leu-Gln-Gln-Gln-Ile-Gln (LQQQIQ) (PubMed:16778770).</text>
</comment>
<comment type="PTM">
    <molecule>Isoform 4</molecule>
    <text evidence="20 22 42 46 55">Cleavage at position S2 by YME1L is required to mediate oxidative phosphorylation (OXPHOS)-induced mitochondrial fusion (PubMed:17709429, PubMed:24616225, PubMed:27495975). Cleavage occurs in the sequence motif Leu-Gln-Gln-Gln-Ile-Gln (LQQQIQ) (PubMed:16778770). Cleavage at position S3 by YME1L is required for membrane tubulation (PubMed:33237841).</text>
</comment>
<comment type="PTM">
    <molecule>Isoform 5</molecule>
    <text evidence="55">Cleavage at position S3 by YME1L is required for membrane tubulation.</text>
</comment>
<comment type="disease" evidence="6 7 8 9 10 11 12 13 16 18 19 26 27 28 29 30 32 38 39 41 50">
    <disease id="DI-02097">
        <name>Optic atrophy 1</name>
        <acronym>OPA1</acronym>
        <description>A condition that features progressive visual loss in association with optic atrophy. Atrophy of the optic disk indicates a deficiency in the number of nerve fibers which arise in the retina and converge to form the optic disk, optic nerve, optic chiasm and optic tracts. OPA1 is characterized by an insidious onset of visual impairment in early childhood with moderate to severe loss of visual acuity, temporal optic disk pallor, color vision deficits, and centrocecal scotoma of variable density.</description>
        <dbReference type="MIM" id="165500"/>
    </disease>
    <text>The disease is caused by variants affecting the gene represented in this entry.</text>
</comment>
<comment type="disease" evidence="15 17 23 24 25 32 35 40">
    <disease id="DI-02096">
        <name>Dominant optic atrophy plus syndrome</name>
        <acronym>DOA+</acronym>
        <description>A neurologic disorder characterized most commonly by an insidious onset of visual loss and sensorineural hearing loss in childhood with variable presentation of other clinical manifestations including progressive external ophthalmoplegia, muscle cramps, hyperreflexia, and ataxia. There appears to be a wide range of intermediate phenotypes.</description>
        <dbReference type="MIM" id="125250"/>
    </disease>
    <text>The disease is caused by variants affecting the gene represented in this entry.</text>
</comment>
<comment type="disease" evidence="37 43 44">
    <disease id="DI-04690">
        <name>Behr syndrome</name>
        <acronym>BEHRS</acronym>
        <description>An autosomal recessive syndrome characterized by optic atrophy beginning in early childhood associated with ataxia, pyramidal signs, spasticity, intellectual disability, and posterior column sensory loss. The ataxia, spasticity, and muscle contractures, mainly of the hip adductors, hamstrings, and soleus, are progressive and become more prominent in the second decade.</description>
        <dbReference type="MIM" id="210000"/>
    </disease>
    <text>The disease is caused by variants affecting the gene represented in this entry.</text>
</comment>
<comment type="disease" evidence="45">
    <disease id="DI-04691">
        <name>Mitochondrial DNA depletion syndrome 14, cardioencephalomyopathic type</name>
        <acronym>MTDPS14</acronym>
        <description>An autosomal recessive mitochondrial disorder characterized by lethal infantile encephalopathy, hypertrophic cardiomyopathy and optic atrophy. Skeletal muscle biopsies show significant mtDNA depletion and abnormal mitochondria.</description>
        <dbReference type="MIM" id="616896"/>
    </disease>
    <text>The disease is caused by variants affecting the gene represented in this entry.</text>
</comment>
<comment type="similarity">
    <text evidence="5">Belongs to the TRAFAC class dynamin-like GTPase superfamily. Dynamin/Fzo/YdjA family.</text>
</comment>
<comment type="sequence caution" evidence="66">
    <conflict type="miscellaneous discrepancy">
        <sequence resource="EMBL" id="AF416919"/>
    </conflict>
</comment>
<proteinExistence type="evidence at protein level"/>
<evidence type="ECO:0000250" key="1">
    <source>
        <dbReference type="UniProtKB" id="G0SGC7"/>
    </source>
</evidence>
<evidence type="ECO:0000250" key="2">
    <source>
        <dbReference type="UniProtKB" id="P58281"/>
    </source>
</evidence>
<evidence type="ECO:0000250" key="3">
    <source>
        <dbReference type="UniProtKB" id="Q2TA68"/>
    </source>
</evidence>
<evidence type="ECO:0000255" key="4"/>
<evidence type="ECO:0000255" key="5">
    <source>
        <dbReference type="PROSITE-ProRule" id="PRU01055"/>
    </source>
</evidence>
<evidence type="ECO:0000269" key="6">
    <source>
    </source>
</evidence>
<evidence type="ECO:0000269" key="7">
    <source>
    </source>
</evidence>
<evidence type="ECO:0000269" key="8">
    <source>
    </source>
</evidence>
<evidence type="ECO:0000269" key="9">
    <source>
    </source>
</evidence>
<evidence type="ECO:0000269" key="10">
    <source>
    </source>
</evidence>
<evidence type="ECO:0000269" key="11">
    <source>
    </source>
</evidence>
<evidence type="ECO:0000269" key="12">
    <source>
    </source>
</evidence>
<evidence type="ECO:0000269" key="13">
    <source>
    </source>
</evidence>
<evidence type="ECO:0000269" key="14">
    <source>
    </source>
</evidence>
<evidence type="ECO:0000269" key="15">
    <source>
    </source>
</evidence>
<evidence type="ECO:0000269" key="16">
    <source>
    </source>
</evidence>
<evidence type="ECO:0000269" key="17">
    <source>
    </source>
</evidence>
<evidence type="ECO:0000269" key="18">
    <source>
    </source>
</evidence>
<evidence type="ECO:0000269" key="19">
    <source>
    </source>
</evidence>
<evidence type="ECO:0000269" key="20">
    <source>
    </source>
</evidence>
<evidence type="ECO:0000269" key="21">
    <source>
    </source>
</evidence>
<evidence type="ECO:0000269" key="22">
    <source>
    </source>
</evidence>
<evidence type="ECO:0000269" key="23">
    <source>
    </source>
</evidence>
<evidence type="ECO:0000269" key="24">
    <source>
    </source>
</evidence>
<evidence type="ECO:0000269" key="25">
    <source>
    </source>
</evidence>
<evidence type="ECO:0000269" key="26">
    <source>
    </source>
</evidence>
<evidence type="ECO:0000269" key="27">
    <source>
    </source>
</evidence>
<evidence type="ECO:0000269" key="28">
    <source>
    </source>
</evidence>
<evidence type="ECO:0000269" key="29">
    <source>
    </source>
</evidence>
<evidence type="ECO:0000269" key="30">
    <source>
    </source>
</evidence>
<evidence type="ECO:0000269" key="31">
    <source>
    </source>
</evidence>
<evidence type="ECO:0000269" key="32">
    <source>
    </source>
</evidence>
<evidence type="ECO:0000269" key="33">
    <source>
    </source>
</evidence>
<evidence type="ECO:0000269" key="34">
    <source>
    </source>
</evidence>
<evidence type="ECO:0000269" key="35">
    <source>
    </source>
</evidence>
<evidence type="ECO:0000269" key="36">
    <source>
    </source>
</evidence>
<evidence type="ECO:0000269" key="37">
    <source>
    </source>
</evidence>
<evidence type="ECO:0000269" key="38">
    <source>
    </source>
</evidence>
<evidence type="ECO:0000269" key="39">
    <source>
    </source>
</evidence>
<evidence type="ECO:0000269" key="40">
    <source>
    </source>
</evidence>
<evidence type="ECO:0000269" key="41">
    <source>
    </source>
</evidence>
<evidence type="ECO:0000269" key="42">
    <source>
    </source>
</evidence>
<evidence type="ECO:0000269" key="43">
    <source>
    </source>
</evidence>
<evidence type="ECO:0000269" key="44">
    <source>
    </source>
</evidence>
<evidence type="ECO:0000269" key="45">
    <source>
    </source>
</evidence>
<evidence type="ECO:0000269" key="46">
    <source>
    </source>
</evidence>
<evidence type="ECO:0000269" key="47">
    <source>
    </source>
</evidence>
<evidence type="ECO:0000269" key="48">
    <source>
    </source>
</evidence>
<evidence type="ECO:0000269" key="49">
    <source>
    </source>
</evidence>
<evidence type="ECO:0000269" key="50">
    <source>
    </source>
</evidence>
<evidence type="ECO:0000269" key="51">
    <source>
    </source>
</evidence>
<evidence type="ECO:0000269" key="52">
    <source>
    </source>
</evidence>
<evidence type="ECO:0000269" key="53">
    <source>
    </source>
</evidence>
<evidence type="ECO:0000269" key="54">
    <source>
    </source>
</evidence>
<evidence type="ECO:0000269" key="55">
    <source>
    </source>
</evidence>
<evidence type="ECO:0000269" key="56">
    <source>
    </source>
</evidence>
<evidence type="ECO:0000269" key="57">
    <source>
    </source>
</evidence>
<evidence type="ECO:0000269" key="58">
    <source>
    </source>
</evidence>
<evidence type="ECO:0000303" key="59">
    <source>
    </source>
</evidence>
<evidence type="ECO:0000303" key="60">
    <source>
    </source>
</evidence>
<evidence type="ECO:0000303" key="61">
    <source>
    </source>
</evidence>
<evidence type="ECO:0000303" key="62">
    <source>
    </source>
</evidence>
<evidence type="ECO:0000303" key="63">
    <source>
    </source>
</evidence>
<evidence type="ECO:0000303" key="64">
    <source>
    </source>
</evidence>
<evidence type="ECO:0000303" key="65">
    <source>
    </source>
</evidence>
<evidence type="ECO:0000305" key="66"/>
<evidence type="ECO:0000305" key="67">
    <source>
    </source>
</evidence>
<evidence type="ECO:0000305" key="68">
    <source>
    </source>
</evidence>
<evidence type="ECO:0000305" key="69">
    <source>
    </source>
</evidence>
<evidence type="ECO:0000305" key="70">
    <source>
    </source>
</evidence>
<evidence type="ECO:0000305" key="71">
    <source>
    </source>
</evidence>
<evidence type="ECO:0000305" key="72">
    <source>
    </source>
</evidence>
<evidence type="ECO:0000305" key="73">
    <source>
    </source>
</evidence>
<evidence type="ECO:0000312" key="74">
    <source>
        <dbReference type="HGNC" id="HGNC:8140"/>
    </source>
</evidence>
<evidence type="ECO:0007744" key="75">
    <source>
        <dbReference type="PDB" id="6JTG"/>
    </source>
</evidence>
<evidence type="ECO:0007744" key="76">
    <source>
        <dbReference type="PDB" id="8CT1"/>
    </source>
</evidence>
<evidence type="ECO:0007744" key="77">
    <source>
        <dbReference type="PDB" id="8CT9"/>
    </source>
</evidence>
<evidence type="ECO:0007744" key="78">
    <source>
        <dbReference type="PDB" id="8EEW"/>
    </source>
</evidence>
<evidence type="ECO:0007744" key="79">
    <source>
        <dbReference type="PDB" id="8EF7"/>
    </source>
</evidence>
<evidence type="ECO:0007744" key="80">
    <source>
        <dbReference type="PDB" id="8EFF"/>
    </source>
</evidence>
<evidence type="ECO:0007744" key="81">
    <source>
        <dbReference type="PDB" id="8EFR"/>
    </source>
</evidence>
<evidence type="ECO:0007744" key="82">
    <source>
        <dbReference type="PDB" id="8EFS"/>
    </source>
</evidence>
<evidence type="ECO:0007744" key="83">
    <source>
        <dbReference type="PDB" id="8EFT"/>
    </source>
</evidence>
<evidence type="ECO:0007744" key="84">
    <source>
    </source>
</evidence>
<evidence type="ECO:0007829" key="85">
    <source>
        <dbReference type="PDB" id="6JTG"/>
    </source>
</evidence>
<protein>
    <recommendedName>
        <fullName>Dynamin-like GTPase OPA1, mitochondrial</fullName>
        <ecNumber evidence="32 47 48 50 52 56 57">3.6.5.5</ecNumber>
    </recommendedName>
    <alternativeName>
        <fullName evidence="59">Optic atrophy protein 1</fullName>
    </alternativeName>
    <component>
        <recommendedName>
            <fullName evidence="66">Dynamin-like GTPase OPA1, long form</fullName>
            <shortName evidence="64">L-OPA1</shortName>
        </recommendedName>
    </component>
    <component>
        <recommendedName>
            <fullName evidence="66">Dynamin-like GTPase OPA1, short form</fullName>
            <shortName evidence="64">S-OPA1</shortName>
        </recommendedName>
    </component>
</protein>
<organism>
    <name type="scientific">Homo sapiens</name>
    <name type="common">Human</name>
    <dbReference type="NCBI Taxonomy" id="9606"/>
    <lineage>
        <taxon>Eukaryota</taxon>
        <taxon>Metazoa</taxon>
        <taxon>Chordata</taxon>
        <taxon>Craniata</taxon>
        <taxon>Vertebrata</taxon>
        <taxon>Euteleostomi</taxon>
        <taxon>Mammalia</taxon>
        <taxon>Eutheria</taxon>
        <taxon>Euarchontoglires</taxon>
        <taxon>Primates</taxon>
        <taxon>Haplorrhini</taxon>
        <taxon>Catarrhini</taxon>
        <taxon>Hominidae</taxon>
        <taxon>Homo</taxon>
    </lineage>
</organism>
<reference key="1">
    <citation type="journal article" date="1998" name="DNA Res.">
        <title>Prediction of the coding sequences of unidentified human genes. IX. The complete sequences of 100 new cDNA clones from brain which can code for large proteins in vitro.</title>
        <authorList>
            <person name="Nagase T."/>
            <person name="Ishikawa K."/>
            <person name="Miyajima N."/>
            <person name="Tanaka A."/>
            <person name="Kotani H."/>
            <person name="Nomura N."/>
            <person name="Ohara O."/>
        </authorList>
    </citation>
    <scope>NUCLEOTIDE SEQUENCE [LARGE SCALE MRNA] (ISOFORM 1)</scope>
    <scope>VARIANT ASN-158</scope>
    <source>
        <tissue>Brain</tissue>
    </source>
</reference>
<reference key="2">
    <citation type="journal article" date="2011" name="Nucleic Acids Res.">
        <title>Identification of rare DNA variants in mitochondrial disorders with improved array-based sequencing.</title>
        <authorList>
            <person name="Wang W."/>
            <person name="Shen P."/>
            <person name="Thiyagarajan S."/>
            <person name="Lin S."/>
            <person name="Palm C."/>
            <person name="Horvath R."/>
            <person name="Klopstock T."/>
            <person name="Cutler D."/>
            <person name="Pique L."/>
            <person name="Schrijver I."/>
            <person name="Davis R.W."/>
            <person name="Mindrinos M."/>
            <person name="Speed T.P."/>
            <person name="Scharfe C."/>
        </authorList>
    </citation>
    <scope>NUCLEOTIDE SEQUENCE [GENOMIC DNA] (ISOFORMS 1; 3; 4; 5 AND 7)</scope>
</reference>
<reference key="3">
    <citation type="journal article" date="2006" name="Nature">
        <title>The DNA sequence, annotation and analysis of human chromosome 3.</title>
        <authorList>
            <person name="Muzny D.M."/>
            <person name="Scherer S.E."/>
            <person name="Kaul R."/>
            <person name="Wang J."/>
            <person name="Yu J."/>
            <person name="Sudbrak R."/>
            <person name="Buhay C.J."/>
            <person name="Chen R."/>
            <person name="Cree A."/>
            <person name="Ding Y."/>
            <person name="Dugan-Rocha S."/>
            <person name="Gill R."/>
            <person name="Gunaratne P."/>
            <person name="Harris R.A."/>
            <person name="Hawes A.C."/>
            <person name="Hernandez J."/>
            <person name="Hodgson A.V."/>
            <person name="Hume J."/>
            <person name="Jackson A."/>
            <person name="Khan Z.M."/>
            <person name="Kovar-Smith C."/>
            <person name="Lewis L.R."/>
            <person name="Lozado R.J."/>
            <person name="Metzker M.L."/>
            <person name="Milosavljevic A."/>
            <person name="Miner G.R."/>
            <person name="Morgan M.B."/>
            <person name="Nazareth L.V."/>
            <person name="Scott G."/>
            <person name="Sodergren E."/>
            <person name="Song X.-Z."/>
            <person name="Steffen D."/>
            <person name="Wei S."/>
            <person name="Wheeler D.A."/>
            <person name="Wright M.W."/>
            <person name="Worley K.C."/>
            <person name="Yuan Y."/>
            <person name="Zhang Z."/>
            <person name="Adams C.Q."/>
            <person name="Ansari-Lari M.A."/>
            <person name="Ayele M."/>
            <person name="Brown M.J."/>
            <person name="Chen G."/>
            <person name="Chen Z."/>
            <person name="Clendenning J."/>
            <person name="Clerc-Blankenburg K.P."/>
            <person name="Chen R."/>
            <person name="Chen Z."/>
            <person name="Davis C."/>
            <person name="Delgado O."/>
            <person name="Dinh H.H."/>
            <person name="Dong W."/>
            <person name="Draper H."/>
            <person name="Ernst S."/>
            <person name="Fu G."/>
            <person name="Gonzalez-Garay M.L."/>
            <person name="Garcia D.K."/>
            <person name="Gillett W."/>
            <person name="Gu J."/>
            <person name="Hao B."/>
            <person name="Haugen E."/>
            <person name="Havlak P."/>
            <person name="He X."/>
            <person name="Hennig S."/>
            <person name="Hu S."/>
            <person name="Huang W."/>
            <person name="Jackson L.R."/>
            <person name="Jacob L.S."/>
            <person name="Kelly S.H."/>
            <person name="Kube M."/>
            <person name="Levy R."/>
            <person name="Li Z."/>
            <person name="Liu B."/>
            <person name="Liu J."/>
            <person name="Liu W."/>
            <person name="Lu J."/>
            <person name="Maheshwari M."/>
            <person name="Nguyen B.-V."/>
            <person name="Okwuonu G.O."/>
            <person name="Palmeiri A."/>
            <person name="Pasternak S."/>
            <person name="Perez L.M."/>
            <person name="Phelps K.A."/>
            <person name="Plopper F.J."/>
            <person name="Qiang B."/>
            <person name="Raymond C."/>
            <person name="Rodriguez R."/>
            <person name="Saenphimmachak C."/>
            <person name="Santibanez J."/>
            <person name="Shen H."/>
            <person name="Shen Y."/>
            <person name="Subramanian S."/>
            <person name="Tabor P.E."/>
            <person name="Verduzco D."/>
            <person name="Waldron L."/>
            <person name="Wang J."/>
            <person name="Wang J."/>
            <person name="Wang Q."/>
            <person name="Williams G.A."/>
            <person name="Wong G.K.-S."/>
            <person name="Yao Z."/>
            <person name="Zhang J."/>
            <person name="Zhang X."/>
            <person name="Zhao G."/>
            <person name="Zhou J."/>
            <person name="Zhou Y."/>
            <person name="Nelson D."/>
            <person name="Lehrach H."/>
            <person name="Reinhardt R."/>
            <person name="Naylor S.L."/>
            <person name="Yang H."/>
            <person name="Olson M."/>
            <person name="Weinstock G."/>
            <person name="Gibbs R.A."/>
        </authorList>
    </citation>
    <scope>NUCLEOTIDE SEQUENCE [LARGE SCALE GENOMIC DNA]</scope>
</reference>
<reference key="4">
    <citation type="submission" date="2005-09" db="EMBL/GenBank/DDBJ databases">
        <authorList>
            <person name="Mural R.J."/>
            <person name="Istrail S."/>
            <person name="Sutton G.G."/>
            <person name="Florea L."/>
            <person name="Halpern A.L."/>
            <person name="Mobarry C.M."/>
            <person name="Lippert R."/>
            <person name="Walenz B."/>
            <person name="Shatkay H."/>
            <person name="Dew I."/>
            <person name="Miller J.R."/>
            <person name="Flanigan M.J."/>
            <person name="Edwards N.J."/>
            <person name="Bolanos R."/>
            <person name="Fasulo D."/>
            <person name="Halldorsson B.V."/>
            <person name="Hannenhalli S."/>
            <person name="Turner R."/>
            <person name="Yooseph S."/>
            <person name="Lu F."/>
            <person name="Nusskern D.R."/>
            <person name="Shue B.C."/>
            <person name="Zheng X.H."/>
            <person name="Zhong F."/>
            <person name="Delcher A.L."/>
            <person name="Huson D.H."/>
            <person name="Kravitz S.A."/>
            <person name="Mouchard L."/>
            <person name="Reinert K."/>
            <person name="Remington K.A."/>
            <person name="Clark A.G."/>
            <person name="Waterman M.S."/>
            <person name="Eichler E.E."/>
            <person name="Adams M.D."/>
            <person name="Hunkapiller M.W."/>
            <person name="Myers E.W."/>
            <person name="Venter J.C."/>
        </authorList>
    </citation>
    <scope>NUCLEOTIDE SEQUENCE [LARGE SCALE GENOMIC DNA]</scope>
</reference>
<reference key="5">
    <citation type="journal article" date="2004" name="Genome Res.">
        <title>The status, quality, and expansion of the NIH full-length cDNA project: the Mammalian Gene Collection (MGC).</title>
        <authorList>
            <consortium name="The MGC Project Team"/>
        </authorList>
    </citation>
    <scope>NUCLEOTIDE SEQUENCE [LARGE SCALE MRNA] (ISOFORM 1)</scope>
    <scope>VARIANT ASN-158</scope>
    <source>
        <tissue>Brain</tissue>
    </source>
</reference>
<reference key="6">
    <citation type="journal article" date="2001" name="Hum. Genet.">
        <title>Mutation spectrum and splicing variants in the OPA1 gene.</title>
        <authorList>
            <person name="Delettre C."/>
            <person name="Griffoin J.-M."/>
            <person name="Kaplan J."/>
            <person name="Dollfus H."/>
            <person name="Lorenz B."/>
            <person name="Faivre L."/>
            <person name="Lenaers G."/>
            <person name="Belenguer P."/>
            <person name="Hamel C.P."/>
        </authorList>
    </citation>
    <scope>PARTIAL NUCLEOTIDE SEQUENCE [GENOMIC DNA] (ISOFORM 2)</scope>
    <scope>ALTERNATIVE SPLICING</scope>
    <scope>TISSUE SPECIFICITY</scope>
    <scope>VARIANTS OPA1 GLN-290; ARG-785 AND PRO-939</scope>
</reference>
<reference key="7">
    <citation type="journal article" date="2000" name="Nat. Genet.">
        <title>Nuclear gene OPA1, encoding a mitochondrial dynamin-related protein, is mutated in dominant optic atrophy.</title>
        <authorList>
            <person name="Delettre C."/>
            <person name="Lenaers G."/>
            <person name="Griffoin J.-M."/>
            <person name="Gigarel N."/>
            <person name="Lorenzo C."/>
            <person name="Belenguer P."/>
            <person name="Pelloquin L."/>
            <person name="Grosgeorge J."/>
            <person name="Turc-Carel C."/>
            <person name="Perret E."/>
            <person name="Astarie-Dequeker C."/>
            <person name="Lasquellec L."/>
            <person name="Arnaud B."/>
            <person name="Ducommun B."/>
            <person name="Kaplan J."/>
            <person name="Hamel C.P."/>
        </authorList>
    </citation>
    <scope>SUBCELLULAR LOCATION</scope>
    <scope>TISSUE SPECIFICITY</scope>
    <scope>VARIANT OPA1 GLU-300</scope>
</reference>
<reference key="8">
    <citation type="journal article" date="2000" name="Nat. Genet.">
        <title>OPA1, encoding a dynamin-related GTPase, is mutated in autosomal dominant optic atrophy linked to chromosome 3q28.</title>
        <authorList>
            <person name="Alexander C."/>
            <person name="Votruba M."/>
            <person name="Pesch U.E.A."/>
            <person name="Thiselton D.L."/>
            <person name="Mayer S."/>
            <person name="Moore A."/>
            <person name="Rodriguez M."/>
            <person name="Kellner U."/>
            <person name="Leo-Kottler B."/>
            <person name="Auburger G."/>
            <person name="Bhattacharya S.S."/>
            <person name="Wissinger B."/>
        </authorList>
    </citation>
    <scope>TISSUE SPECIFICITY</scope>
    <scope>VARIANTS OPA1 GLN-290 AND ILE-432 DEL</scope>
</reference>
<reference key="9">
    <citation type="journal article" date="2006" name="EMBO J.">
        <title>Regulation of mitochondrial morphology through proteolytic cleavage of OPA1.</title>
        <authorList>
            <person name="Ishihara N."/>
            <person name="Fujita Y."/>
            <person name="Oka T."/>
            <person name="Mihara K."/>
        </authorList>
    </citation>
    <scope>FUNCTION</scope>
    <scope>SUBCELLULAR LOCATION</scope>
    <scope>PROTEOLYTIC PROCESSING</scope>
</reference>
<reference key="10">
    <citation type="journal article" date="2007" name="J. Cell Biol.">
        <title>OPA1 processing controls mitochondrial fusion and is regulated by mRNA splicing, membrane potential, and Yme1L.</title>
        <authorList>
            <person name="Song Z."/>
            <person name="Chen H."/>
            <person name="Fiket M."/>
            <person name="Alexander C."/>
            <person name="Chan D.C."/>
        </authorList>
    </citation>
    <scope>FUNCTION</scope>
    <scope>ALTERNATIVE SPLICING</scope>
    <scope>PROTEOLYTIC CLEAVAGE</scope>
</reference>
<reference key="11">
    <citation type="journal article" date="2007" name="Mol. Biol. Cell">
        <title>OPA1 processing reconstituted in yeast depends on the subunit composition of the m-AAA protease in mitochondria.</title>
        <authorList>
            <person name="Duvezin-Caubet S."/>
            <person name="Koppen M."/>
            <person name="Wagener J."/>
            <person name="Zick M."/>
            <person name="Israel L."/>
            <person name="Bernacchia A."/>
            <person name="Jagasia R."/>
            <person name="Rugarli E.I."/>
            <person name="Imhof A."/>
            <person name="Neupert W."/>
            <person name="Langer T."/>
            <person name="Reichert A.S."/>
        </authorList>
    </citation>
    <scope>ALTERNATIVE SPLICING</scope>
    <scope>PROTEOLYTIC CLEAVAGE</scope>
</reference>
<reference key="12">
    <citation type="journal article" date="2009" name="J. Cell Biol.">
        <title>Inducible proteolytic inactivation of OPA1 mediated by the OMA1 protease in mammalian cells.</title>
        <authorList>
            <person name="Head B."/>
            <person name="Griparic L."/>
            <person name="Amiri M."/>
            <person name="Gandre-Babbe S."/>
            <person name="van der Bliek A.M."/>
        </authorList>
    </citation>
    <scope>FUNCTION (DYNAMIN-LIKE 120 KDA PROTEIN; FORM S1)</scope>
    <scope>PROTEOLYTIC PROCESSING</scope>
</reference>
<reference key="13">
    <citation type="journal article" date="2009" name="Science">
        <title>Lysine acetylation targets protein complexes and co-regulates major cellular functions.</title>
        <authorList>
            <person name="Choudhary C."/>
            <person name="Kumar C."/>
            <person name="Gnad F."/>
            <person name="Nielsen M.L."/>
            <person name="Rehman M."/>
            <person name="Walther T.C."/>
            <person name="Olsen J.V."/>
            <person name="Mann M."/>
        </authorList>
    </citation>
    <scope>ACETYLATION [LARGE SCALE ANALYSIS] AT LYS-228</scope>
    <scope>IDENTIFICATION BY MASS SPECTROMETRY [LARGE SCALE ANALYSIS]</scope>
</reference>
<reference key="14">
    <citation type="journal article" date="2010" name="Cell Death Dis.">
        <title>Vital function of PRELI and essential requirement of its LEA motif.</title>
        <authorList>
            <person name="McKeller M.R."/>
            <person name="Herrera-Rodriguez S."/>
            <person name="Ma W."/>
            <person name="Ortiz-Quintero B."/>
            <person name="Rangel R."/>
            <person name="Cande C."/>
            <person name="Sims-Mourtada J.C."/>
            <person name="Melnikova V."/>
            <person name="Kashi C."/>
            <person name="Phan L.M."/>
            <person name="Chen Z."/>
            <person name="Huang P."/>
            <person name="Dunner K. Jr."/>
            <person name="Kroemer G."/>
            <person name="Singh K.K."/>
            <person name="Martinez-Valdez H."/>
        </authorList>
    </citation>
    <scope>INTERACTION WITH PRELID1</scope>
</reference>
<reference key="15">
    <citation type="journal article" date="2010" name="Hum. Mol. Genet.">
        <title>OPA1 disease alleles causing dominant optic atrophy have defects in cardiolipin-stimulated GTP hydrolysis and membrane tubulation.</title>
        <authorList>
            <person name="Ban T."/>
            <person name="Heymann J.A."/>
            <person name="Song Z."/>
            <person name="Hinshaw J.E."/>
            <person name="Chan D.C."/>
        </authorList>
    </citation>
    <scope>FUNCTION</scope>
    <scope>CATALYTIC ACTIVITY</scope>
    <scope>DOMAIN</scope>
    <scope>SUBUNIT</scope>
    <scope>CHARACTERIZATION OF VARIANTS OPA1 GLU-300; VAL-439; HIS-445; ARG-545; LYS-728; ARG-785 AND PRO-939</scope>
    <scope>CHARACTERIZATION OF VARIANTS VARIANT DOA+ THR-357; VAL-439; HIS-445; ARG-545 AND ASP-910</scope>
</reference>
<reference key="16">
    <citation type="journal article" date="2011" name="BMC Syst. Biol.">
        <title>Initial characterization of the human central proteome.</title>
        <authorList>
            <person name="Burkard T.R."/>
            <person name="Planyavsky M."/>
            <person name="Kaupe I."/>
            <person name="Breitwieser F.P."/>
            <person name="Buerckstuemmer T."/>
            <person name="Bennett K.L."/>
            <person name="Superti-Furga G."/>
            <person name="Colinge J."/>
        </authorList>
    </citation>
    <scope>IDENTIFICATION BY MASS SPECTROMETRY [LARGE SCALE ANALYSIS]</scope>
</reference>
<reference key="17">
    <citation type="journal article" date="2011" name="Brain">
        <title>Heterozygous OPA1 mutations in Behr syndrome.</title>
        <authorList>
            <person name="Marelli C."/>
            <person name="Amati-Bonneau P."/>
            <person name="Reynier P."/>
            <person name="Layet V."/>
            <person name="Layet A."/>
            <person name="Stevanin G."/>
            <person name="Brissaud E."/>
            <person name="Bonneau D."/>
            <person name="Durr A."/>
            <person name="Brice A."/>
        </authorList>
    </citation>
    <scope>INVOLVEMENT IN DOA+</scope>
    <scope>VARIANT DOA+ TYR-551</scope>
</reference>
<reference key="18">
    <citation type="journal article" date="2011" name="Genome Res.">
        <title>OPA1 links human mitochondrial genome maintenance to mtDNA replication and distribution.</title>
        <authorList>
            <person name="Elachouri G."/>
            <person name="Vidoni S."/>
            <person name="Zanna C."/>
            <person name="Pattyn A."/>
            <person name="Boukhaddaoui H."/>
            <person name="Gaget K."/>
            <person name="Yu-Wai-Man P."/>
            <person name="Gasparre G."/>
            <person name="Sarzi E."/>
            <person name="Delettre C."/>
            <person name="Olichon A."/>
            <person name="Loiseau D."/>
            <person name="Reynier P."/>
            <person name="Chinnery P.F."/>
            <person name="Rotig A."/>
            <person name="Carelli V."/>
            <person name="Hamel C.P."/>
            <person name="Rugolo M."/>
            <person name="Lenaers G."/>
        </authorList>
    </citation>
    <scope>FUNCTION (ISOFORMS 4 AND 5)</scope>
    <scope>SUBCELLULAR LOCATION</scope>
</reference>
<reference key="19">
    <citation type="journal article" date="2011" name="J. Biol. Chem.">
        <title>ChChd3, an inner mitochondrial membrane protein, is essential for maintaining crista integrity and mitochondrial function.</title>
        <authorList>
            <person name="Darshi M."/>
            <person name="Mendiola V.L."/>
            <person name="Mackey M.R."/>
            <person name="Murphy A.N."/>
            <person name="Koller A."/>
            <person name="Perkins G.A."/>
            <person name="Ellisman M.H."/>
            <person name="Taylor S.S."/>
        </authorList>
    </citation>
    <scope>INTERACTION WITH CHCHD3 AND IMMT</scope>
</reference>
<reference key="20">
    <citation type="journal article" date="2011" name="Mol. Genet. Metab.">
        <title>Early-onset severe neuromuscular phenotype associated with compound heterozygosity for OPA1 mutations.</title>
        <authorList>
            <person name="Schaaf C.P."/>
            <person name="Blazo M."/>
            <person name="Lewis R.A."/>
            <person name="Tonini R.E."/>
            <person name="Takei H."/>
            <person name="Wang J."/>
            <person name="Wong L.J."/>
            <person name="Scaglia F."/>
        </authorList>
    </citation>
    <scope>INVOLVEMENT IN BEHRS</scope>
    <scope>VARIANT BEHRS MET-382</scope>
</reference>
<reference key="21">
    <citation type="journal article" date="2014" name="Brain">
        <title>Early-onset Behr syndrome due to compound heterozygous mutations in OPA1.</title>
        <authorList>
            <person name="Bonneau D."/>
            <person name="Colin E."/>
            <person name="Oca F."/>
            <person name="Ferre M."/>
            <person name="Chevrollier A."/>
            <person name="Gueguen N."/>
            <person name="Desquiret-Dumas V."/>
            <person name="N'Guyen S."/>
            <person name="Barth M."/>
            <person name="Zanlonghi X."/>
            <person name="Rio M."/>
            <person name="Desguerre I."/>
            <person name="Barnerias C."/>
            <person name="Momtchilova M."/>
            <person name="Rodriguez D."/>
            <person name="Slama A."/>
            <person name="Lenaers G."/>
            <person name="Procaccio V."/>
            <person name="Amati-Bonneau P."/>
            <person name="Reynier P."/>
        </authorList>
    </citation>
    <scope>INVOLVEMENT IN BEHRS</scope>
    <scope>VARIANTS BEHRS MET-382; MET-402 AND LYS-487</scope>
</reference>
<reference key="22">
    <citation type="journal article" date="2014" name="J. Cell Biol.">
        <title>The i-AAA protease YME1L and OMA1 cleave OPA1 to balance mitochondrial fusion and fission.</title>
        <authorList>
            <person name="Anand R."/>
            <person name="Wai T."/>
            <person name="Baker M.J."/>
            <person name="Kladt N."/>
            <person name="Schauss A.C."/>
            <person name="Rugarli E."/>
            <person name="Langer T."/>
        </authorList>
    </citation>
    <scope>FUNCTION</scope>
    <scope>PROTEOLYTIC CLEAVAGE</scope>
    <scope>SUBCELLULAR LOCATION</scope>
</reference>
<reference key="23">
    <citation type="journal article" date="2014" name="J. Proteomics">
        <title>An enzyme assisted RP-RPLC approach for in-depth analysis of human liver phosphoproteome.</title>
        <authorList>
            <person name="Bian Y."/>
            <person name="Song C."/>
            <person name="Cheng K."/>
            <person name="Dong M."/>
            <person name="Wang F."/>
            <person name="Huang J."/>
            <person name="Sun D."/>
            <person name="Wang L."/>
            <person name="Ye M."/>
            <person name="Zou H."/>
        </authorList>
    </citation>
    <scope>IDENTIFICATION BY MASS SPECTROMETRY [LARGE SCALE ANALYSIS]</scope>
    <source>
        <tissue>Liver</tissue>
    </source>
</reference>
<reference key="24">
    <citation type="journal article" date="2015" name="Brain">
        <title>'Behr syndrome' with OPA1 compound heterozygote mutations.</title>
        <authorList>
            <person name="Carelli V."/>
            <person name="Sabatelli M."/>
            <person name="Carrozzo R."/>
            <person name="Rizza T."/>
            <person name="Schimpf S."/>
            <person name="Wissinger B."/>
            <person name="Zanna C."/>
            <person name="Rugolo M."/>
            <person name="La Morgia C."/>
            <person name="Caporali L."/>
            <person name="Carbonelli M."/>
            <person name="Barboni P."/>
            <person name="Tonon C."/>
            <person name="Lodi R."/>
            <person name="Bertini E."/>
        </authorList>
    </citation>
    <scope>INVOLVEMENT IN BEHRS</scope>
    <scope>VARIANT BEHRS MET-382</scope>
</reference>
<reference key="25">
    <citation type="journal article" date="2015" name="Proteomics">
        <title>N-terminome analysis of the human mitochondrial proteome.</title>
        <authorList>
            <person name="Vaca Jacome A.S."/>
            <person name="Rabilloud T."/>
            <person name="Schaeffer-Reiss C."/>
            <person name="Rompais M."/>
            <person name="Ayoub D."/>
            <person name="Lane L."/>
            <person name="Bairoch A."/>
            <person name="Van Dorsselaer A."/>
            <person name="Carapito C."/>
        </authorList>
    </citation>
    <scope>IDENTIFICATION BY MASS SPECTROMETRY [LARGE SCALE ANALYSIS]</scope>
</reference>
<reference key="26">
    <citation type="journal article" date="2016" name="Elife">
        <title>Homozygous YME1L1 mutation causes mitochondriopathy with optic atrophy and mitochondrial network fragmentation.</title>
        <authorList>
            <person name="Hartmann B."/>
            <person name="Wai T."/>
            <person name="Hu H."/>
            <person name="MacVicar T."/>
            <person name="Musante L."/>
            <person name="Fischer-Zirnsak B."/>
            <person name="Stenzel W."/>
            <person name="Graef R."/>
            <person name="van den Heuvel L."/>
            <person name="Ropers H.H."/>
            <person name="Wienker T.F."/>
            <person name="Huebner C."/>
            <person name="Langer T."/>
            <person name="Kaindl A.M."/>
        </authorList>
    </citation>
    <scope>PROTEOLYTIC CLEAVAGE BY YME1L</scope>
</reference>
<reference key="27">
    <citation type="journal article" date="2016" name="J. Med. Genet.">
        <title>Fatal infantile mitochondrial encephalomyopathy, hypertrophic cardiomyopathy and optic atrophy associated with a homozygous OPA1 mutation.</title>
        <authorList>
            <person name="Spiegel R."/>
            <person name="Saada A."/>
            <person name="Flannery P.J."/>
            <person name="Burte F."/>
            <person name="Soiferman D."/>
            <person name="Khayat M."/>
            <person name="Eisner V."/>
            <person name="Vladovski E."/>
            <person name="Taylor R.W."/>
            <person name="Bindoff L.A."/>
            <person name="Shaag A."/>
            <person name="Mandel H."/>
            <person name="Schuler-Furman O."/>
            <person name="Shalev S.A."/>
            <person name="Elpeleg O."/>
            <person name="Yu-Wai-Man P."/>
        </authorList>
    </citation>
    <scope>INVOLVEMENT IN MTDPS14</scope>
    <scope>VARIANT MTDPS14 ARG-534</scope>
</reference>
<reference key="28">
    <citation type="journal article" date="2017" name="Cell Rep.">
        <title>WBSCR16 Is a Guanine Nucleotide Exchange Factor Important for Mitochondrial Fusion.</title>
        <authorList>
            <person name="Huang G."/>
            <person name="Massoudi D."/>
            <person name="Muir A.M."/>
            <person name="Joshi D.C."/>
            <person name="Zhang C.L."/>
            <person name="Chiu S.Y."/>
            <person name="Greenspan D.S."/>
        </authorList>
    </citation>
    <scope>ACTIVITY REGULATION</scope>
    <scope>SUBUNIT</scope>
    <scope>CATALYTIC ACTIVITY</scope>
    <scope>FUNCTION</scope>
</reference>
<reference key="29">
    <citation type="journal article" date="2017" name="Nat. Cell Biol.">
        <title>Molecular basis of selective mitochondrial fusion by heterotypic action between OPA1 and cardiolipin.</title>
        <authorList>
            <person name="Ban T."/>
            <person name="Ishihara T."/>
            <person name="Kohno H."/>
            <person name="Saita S."/>
            <person name="Ichimura A."/>
            <person name="Maenaka K."/>
            <person name="Oka T."/>
            <person name="Mihara K."/>
            <person name="Ishihara N."/>
        </authorList>
    </citation>
    <scope>FUNCTION</scope>
    <scope>CATALYTIC ACTIVITY</scope>
    <scope>MUTAGENESIS OF THR-323</scope>
</reference>
<reference key="30">
    <citation type="journal article" date="2020" name="Elife">
        <title>Two forms of Opa1 cooperate to complete fusion of the mitochondrial inner-membrane.</title>
        <authorList>
            <person name="Ge Y."/>
            <person name="Shi X."/>
            <person name="Boopathy S."/>
            <person name="McDonald J."/>
            <person name="Smith A.W."/>
            <person name="Chao L.H."/>
        </authorList>
    </citation>
    <scope>FUNCTION</scope>
</reference>
<reference key="31">
    <citation type="journal article" date="2020" name="Elife">
        <title>Cryo-EM structures of S-OPA1 reveal its interactions with membrane and changes upon nucleotide binding.</title>
        <authorList>
            <person name="Zhang D."/>
            <person name="Zhang Y."/>
            <person name="Ma J."/>
            <person name="Zhu C."/>
            <person name="Niu T."/>
            <person name="Chen W."/>
            <person name="Pang X."/>
            <person name="Zhai Y."/>
            <person name="Sun F."/>
        </authorList>
    </citation>
    <scope>FUNCTION</scope>
    <scope>SUBCELLULAR LOCATION</scope>
    <scope>CATALYTIC ACTIVITY</scope>
    <scope>MUTAGENESIS OF GLN-297; SER-298; THR-302; 794-GLU--GLU-796; 795-LEU--LEU-799 AND 797-LYS--LYS-800</scope>
    <scope>CHARACTERIZATION OF VARIANT OPA1 GLU-300</scope>
</reference>
<reference key="32">
    <citation type="journal article" date="2020" name="Cell Death Dis.">
        <title>OPA1 and MICOS Regulate mitochondrial crista dynamics and formation.</title>
        <authorList>
            <person name="Hu C."/>
            <person name="Shu L."/>
            <person name="Huang X."/>
            <person name="Yu J."/>
            <person name="Li L."/>
            <person name="Gong L."/>
            <person name="Yang M."/>
            <person name="Wu Z."/>
            <person name="Gao Z."/>
            <person name="Zhao Y."/>
            <person name="Chen L."/>
            <person name="Song Z."/>
        </authorList>
    </citation>
    <scope>FUNCTION</scope>
</reference>
<reference key="33">
    <citation type="journal article" date="2020" name="EMBO J.">
        <title>MICOS assembly controls mitochondrial inner membrane remodeling and crista junction redistribution to mediate cristae formation.</title>
        <authorList>
            <person name="Stephan T."/>
            <person name="Brueser C."/>
            <person name="Deckers M."/>
            <person name="Steyer A.M."/>
            <person name="Balzarotti F."/>
            <person name="Barbot M."/>
            <person name="Behr T.S."/>
            <person name="Heim G."/>
            <person name="Huebner W."/>
            <person name="Ilgen P."/>
            <person name="Lange F."/>
            <person name="Pacheu-Grau D."/>
            <person name="Pape J.K."/>
            <person name="Stoldt S."/>
            <person name="Huser T."/>
            <person name="Hell S.W."/>
            <person name="Moebius W."/>
            <person name="Rehling P."/>
            <person name="Riedel D."/>
            <person name="Jakobs S."/>
        </authorList>
    </citation>
    <scope>FUNCTION</scope>
</reference>
<reference key="34">
    <citation type="journal article" date="2020" name="J. Biol. Chem.">
        <title>The short variant of optic atrophy 1 (OPA1) improves cell survival under oxidative stress.</title>
        <authorList>
            <person name="Lee H."/>
            <person name="Smith S.B."/>
            <person name="Sheu S.S."/>
            <person name="Yoon Y."/>
        </authorList>
    </citation>
    <scope>FUNCTION</scope>
    <scope>CATALYTIC ACTIVITY</scope>
    <scope>MUTAGENESIS OF LYS-301</scope>
</reference>
<reference key="35">
    <citation type="journal article" date="2021" name="Mol. Biol. Cell">
        <title>Identification of new OPA1 cleavage site reveals that short isoforms regulate mitochondrial fusion.</title>
        <authorList>
            <person name="Wang R."/>
            <person name="Mishra P."/>
            <person name="Garbis S.D."/>
            <person name="Moradian A."/>
            <person name="Sweredoski M.J."/>
            <person name="Chan D.C."/>
        </authorList>
    </citation>
    <scope>FUNCTION</scope>
    <scope>PROTEOLYTIC CLEAVAGE</scope>
    <scope>MUTAGENESIS OF 195-GLY--LEU-204 AND 200-LEU--LEU-205 (ISOFORMS 4 AND 5)</scope>
</reference>
<reference evidence="75" key="36">
    <citation type="journal article" date="2020" name="J. Cell Biol.">
        <title>Structural insights into G domain dimerization and pathogenic mutation of OPA1.</title>
        <authorList>
            <person name="Yu C."/>
            <person name="Zhao J."/>
            <person name="Yan L."/>
            <person name="Qi Y."/>
            <person name="Guo X."/>
            <person name="Lou Z."/>
            <person name="Hu J."/>
            <person name="Rao Z."/>
        </authorList>
    </citation>
    <scope>X-RAY CRYSTALLOGRAPHY (2.40 ANGSTROMS) OF 263-571 IN COMPLEX WITH GDP AND MAGNESIUM</scope>
    <scope>FUNCTION</scope>
    <scope>CATALYTIC ACTIVITY</scope>
    <scope>MUTAGENESIS OF SER-298; THR-302; ARG-316; GLU-320; MET-321; MET-322; THR-323; ARG-324; ASP-398 AND THR-503</scope>
</reference>
<reference evidence="76 77" key="37">
    <citation type="journal article" date="2023" name="Nature">
        <title>Structural mechanism of mitochondrial membrane remodelling by human OPA1.</title>
        <authorList>
            <person name="von der Malsburg A."/>
            <person name="Sapp G.M."/>
            <person name="Zuccaro K.E."/>
            <person name="von Appen A."/>
            <person name="Moss F.R. III"/>
            <person name="Kalia R."/>
            <person name="Bennett J.A."/>
            <person name="Abriata L.A."/>
            <person name="Dal Peraro M."/>
            <person name="van der Laan M."/>
            <person name="Frost A."/>
            <person name="Aydin H."/>
        </authorList>
    </citation>
    <scope>STRUCTURE BY ELECTRON MICROSCOPY (4.8 ANGSTROMS)</scope>
    <scope>FUNCTION</scope>
    <scope>CATALYTIC ACTIVITY</scope>
    <scope>SUBUNIT</scope>
    <scope>SUBCELLULAR LOCATION</scope>
    <scope>DISULFIDE BOND</scope>
    <scope>TOPOLOGY</scope>
    <scope>DOMAIN</scope>
    <scope>MUTAGENESIS OF LYS-738; TRP-771; LYS-772; ARG-774; TRP-775; LYS-779; ARG-781; LYS-819 AND ARG-858</scope>
</reference>
<reference evidence="78 79 80 81 82 83" key="38">
    <citation type="journal article" date="2023" name="Nature">
        <title>OPA1 helical structures give perspective to mitochondrial dysfunction.</title>
        <authorList>
            <person name="Nyenhuis S.B."/>
            <person name="Wu X."/>
            <person name="Strub M.P."/>
            <person name="Yim Y.I."/>
            <person name="Stanton A.E."/>
            <person name="Baena V."/>
            <person name="Syed Z.A."/>
            <person name="Canagarajah B."/>
            <person name="Hammer J.A."/>
            <person name="Hinshaw J.E."/>
        </authorList>
    </citation>
    <scope>STRUCTURE BY ELECTRON MICROSCOPY (5.48 ANGSTROMS) OF 195-960 IN COMPLEX WITH GDP AND MAGNESIUM</scope>
    <scope>FUNCTION</scope>
    <scope>CATALYTIC ACTIVITY</scope>
    <scope>SUBUNIT</scope>
    <scope>SUBCELLULAR LOCATION</scope>
    <scope>TOPOLOGY</scope>
    <scope>DOMAIN</scope>
    <scope>DISULFIDE BOND</scope>
    <scope>MUTAGENESIS OF GLU-213; GLN-217; ARG-235; LEU-243; LEU-248; LEU-359; GLU-444; ARG-557; ASP-565; 614-LYS-HIS-615; GLU-626; ARG-627; THR-630; HIS-631; THR-651; GLN-659; LYS-663; LYS-668; GLU-671; ARG-683; ASP-716; ILE-735; GLU-760; 771-TRP--ARG-781; 819-LYS-ASN-820; ASP-835 AND 860-PHE--PHE-867</scope>
</reference>
<reference key="39">
    <citation type="journal article" date="2001" name="Hum. Mol. Genet.">
        <title>OPA1 mutations in patients with autosomal dominant optic atrophy and evidence for semi-dominant inheritance.</title>
        <authorList>
            <person name="Pesch U.E.A."/>
            <person name="Leo-Kottler B."/>
            <person name="Mayer S."/>
            <person name="Jurklies B."/>
            <person name="Kellner U."/>
            <person name="Apfelstedt-Sylla E."/>
            <person name="Zrenner E."/>
            <person name="Alexander C."/>
            <person name="Wissinger B."/>
        </authorList>
    </citation>
    <scope>VARIANTS OPA1 LYS-270; ALA-273; GLN-290; TRP-290; VAL-438; GLU-468; CYS-551 DEL AND ARG-785</scope>
    <scope>VARIANTS ASN-158; VAL-192 AND ASN-550</scope>
</reference>
<reference key="40">
    <citation type="journal article" date="2001" name="Hum. Mol. Genet.">
        <title>Spectrum, frequency and penetrance of OPA1 mutations in dominant optic atrophy.</title>
        <authorList>
            <person name="Toomes C."/>
            <person name="Marchbank N.J."/>
            <person name="Mackey D.A."/>
            <person name="Craig J.E."/>
            <person name="Newbury-Ecob R.A."/>
            <person name="Bennett C.P."/>
            <person name="Vize C.J."/>
            <person name="Desai S.P."/>
            <person name="Black G.C.M."/>
            <person name="Patel N."/>
            <person name="Teimory M."/>
            <person name="Markham A.F."/>
            <person name="Inglehearn C.F."/>
            <person name="Churchill A.J."/>
        </authorList>
    </citation>
    <scope>VARIANTS OPA1 GLN-290; GLU-300; PHE-384; LYS-503 AND ASN-505</scope>
    <scope>VARIANTS ASN-158 AND GLY-907</scope>
</reference>
<reference key="41">
    <citation type="journal article" date="2002" name="Invest. Ophthalmol. Vis. Sci.">
        <title>A comprehensive survey of mutations in the OPA1 gene in patients with autosomal dominant optic atrophy.</title>
        <authorList>
            <person name="Thiselton D.L."/>
            <person name="Alexander C."/>
            <person name="Taanman J.-W."/>
            <person name="Brooks S."/>
            <person name="Rosenberg T."/>
            <person name="Eiberg H."/>
            <person name="Andreasson S."/>
            <person name="Van Regemorter N."/>
            <person name="Munier F.L."/>
            <person name="Moore A.T."/>
            <person name="Bhattacharya S.S."/>
            <person name="Votruba M."/>
        </authorList>
    </citation>
    <scope>VARIANTS OPA1 38-ARG--SER-43 DEL; 586-ARG--ASP-589 DEL; ARG-396; ILE-432 DEL; LYS-503 AND HIS-571</scope>
    <scope>VARIANTS ASN-158; LEU-167 AND VAL-192</scope>
</reference>
<reference key="42">
    <citation type="journal article" date="2003" name="Am. J. Ophthalmol.">
        <title>A novel mutation in the OPA1 gene in a Japanese patient with optic atrophy.</title>
        <authorList>
            <person name="Shimizu S."/>
            <person name="Mori N."/>
            <person name="Kishi M."/>
            <person name="Sugata H."/>
            <person name="Tsuda A."/>
            <person name="Kubota N."/>
        </authorList>
    </citation>
    <scope>VARIANT OPA1 HIS-445</scope>
</reference>
<reference key="43">
    <citation type="journal article" date="2003" name="Hum. Mutat.">
        <title>Fourteen novel OPA1 mutations in autosomal dominant optic atrophy including two de novo mutations in sporadic optic atrophy.</title>
        <authorList>
            <person name="Baris O."/>
            <person name="Delettre C."/>
            <person name="Amati-Bonneau P."/>
            <person name="Surget M.-O."/>
            <person name="Charlin J.-F."/>
            <person name="Catier A."/>
            <person name="Derieux L."/>
            <person name="Guyomard J.-L."/>
            <person name="Dollfus H."/>
            <person name="Jonveaux P."/>
            <person name="Ayuso C."/>
            <person name="Maumenee I."/>
            <person name="Lorenz B."/>
            <person name="Mohammed S."/>
            <person name="Tourmen Y."/>
            <person name="Bonneau D."/>
            <person name="Malthiery Y."/>
            <person name="Hamel C."/>
            <person name="Reynier P."/>
        </authorList>
    </citation>
    <scope>VARIANTS OPA1 PRO-272; GLY-470; PRO-574 AND 700-LEU-LYS-701 DEL</scope>
</reference>
<reference key="44">
    <citation type="journal article" date="2004" name="Am. J. Ophthalmol.">
        <title>Dominant optic atrophy, sensorineural hearing loss, ptosis, and ophthalmoplegia: a syndrome caused by a missense mutation in OPA1.</title>
        <authorList>
            <person name="Payne M."/>
            <person name="Yang Z."/>
            <person name="Katz B.J."/>
            <person name="Warner J.E.A."/>
            <person name="Weight C.J."/>
            <person name="Zhao Y."/>
            <person name="Pearson E.D."/>
            <person name="Treft R.L."/>
            <person name="Hillman T."/>
            <person name="Kennedy R.J."/>
            <person name="Meire F.M."/>
            <person name="Zhang K."/>
        </authorList>
    </citation>
    <scope>VARIANT DOA+ HIS-445</scope>
</reference>
<reference key="45">
    <citation type="journal article" date="2005" name="Acta Ophthalmol. Scand.">
        <title>Dominant optic atrophy: correlation between clinical and molecular genetic studies.</title>
        <authorList>
            <person name="Puomila A."/>
            <person name="Huoponen K."/>
            <person name="Maentyjaervi M."/>
            <person name="Haemaelaeinen P."/>
            <person name="Paananen R."/>
            <person name="Sankila E.-M."/>
            <person name="Savontaus M.-L."/>
            <person name="Somer M."/>
            <person name="Nikoskelainen E."/>
        </authorList>
    </citation>
    <scope>VARIANTS OPA1 324-ARG--PRO-326 DEL; TRP-590 AND LYS-728</scope>
    <scope>VARIANT ASN-158</scope>
</reference>
<reference key="46">
    <citation type="journal article" date="2005" name="Ann. Neurol.">
        <title>OPA1 R445H mutation in optic atrophy associated with sensorineural deafness.</title>
        <authorList>
            <person name="Amati-Bonneau P."/>
            <person name="Guichet A."/>
            <person name="Olichon A."/>
            <person name="Chevrollier A."/>
            <person name="Viala F."/>
            <person name="Miot S."/>
            <person name="Ayuso C."/>
            <person name="Odent S."/>
            <person name="Arrouet C."/>
            <person name="Verny C."/>
            <person name="Calmels M.-N."/>
            <person name="Simard G."/>
            <person name="Belenguer P."/>
            <person name="Wang J."/>
            <person name="Puel J.-L."/>
            <person name="Hamel C."/>
            <person name="Malthiery Y."/>
            <person name="Bonneau D."/>
            <person name="Lenaers G."/>
            <person name="Reynier P."/>
        </authorList>
    </citation>
    <scope>VARIANT DOA+ HIS-445</scope>
</reference>
<reference key="47">
    <citation type="journal article" date="2006" name="Genet. Med.">
        <title>OPA1 mutations and mitochondrial DNA haplotypes in autosomal dominant optic atrophy.</title>
        <authorList>
            <person name="Han J."/>
            <person name="Thompson-Lowrey A.J."/>
            <person name="Reiss A."/>
            <person name="Mayorov V."/>
            <person name="Jia H."/>
            <person name="Biousse V."/>
            <person name="Newman N.J."/>
            <person name="Brown M.D."/>
        </authorList>
    </citation>
    <scope>VARIANTS OPA1 SER-8; CYS-80 AND CYS-841</scope>
    <scope>VARIANTS ASN-158 AND VAL-192</scope>
</reference>
<reference key="48">
    <citation type="journal article" date="2006" name="Ophthalmology">
        <title>Novel mutations in the OPA1 gene and associated clinical features in Japanese patients with optic atrophy.</title>
        <authorList>
            <person name="Nakamura M."/>
            <person name="Lin J."/>
            <person name="Ueno S."/>
            <person name="Asaoka R."/>
            <person name="Hirai T."/>
            <person name="Hotta Y."/>
            <person name="Miyake Y."/>
            <person name="Terasaki H."/>
        </authorList>
    </citation>
    <scope>VARIANT OPA1 ARG-545</scope>
</reference>
<reference key="49">
    <citation type="journal article" date="2008" name="Ann. Neurol.">
        <title>Reversible optic neuropathy with OPA1 exon 5b mutation.</title>
        <authorList>
            <person name="Cornille K."/>
            <person name="Milea D."/>
            <person name="Amati-Bonneau P."/>
            <person name="Procaccio V."/>
            <person name="Zazoun L."/>
            <person name="Guillet V."/>
            <person name="El Achouri G."/>
            <person name="Delettre C."/>
            <person name="Gueguen N."/>
            <person name="Loiseau D."/>
            <person name="Muller A."/>
            <person name="Ferre M."/>
            <person name="Chevrollier A."/>
            <person name="Wallace D.C."/>
            <person name="Bonneau D."/>
            <person name="Hamel C."/>
            <person name="Reynier P."/>
            <person name="Lenaers G."/>
        </authorList>
    </citation>
    <scope>VARIANT OPA1 HIS-229 (ISOFORM 2)</scope>
</reference>
<reference key="50">
    <citation type="journal article" date="2008" name="Arch. Neurol.">
        <title>Progressive external ophthalmoplegia and vision and hearing loss in a patient with mutations in POLG2 and OPA1.</title>
        <authorList>
            <person name="Ferraris S."/>
            <person name="Clark S."/>
            <person name="Garelli E."/>
            <person name="Davidzon G."/>
            <person name="Moore S.A."/>
            <person name="Kardon R.H."/>
            <person name="Bienstock R.J."/>
            <person name="Longley M.J."/>
            <person name="Mancuso M."/>
            <person name="Gutierrez Rios P."/>
            <person name="Hirano M."/>
            <person name="Copeland W.C."/>
            <person name="DiMauro S."/>
        </authorList>
    </citation>
    <scope>VARIANT DOA+ CYS-582</scope>
</reference>
<reference key="51">
    <citation type="journal article" date="2008" name="Brain">
        <title>Mutation of OPA1 causes dominant optic atrophy with external ophthalmoplegia, ataxia, deafness and multiple mitochondrial DNA deletions: a novel disorder of mtDNA maintenance.</title>
        <authorList>
            <person name="Hudson G."/>
            <person name="Amati-Bonneau P."/>
            <person name="Blakely E.L."/>
            <person name="Stewart J.D."/>
            <person name="He L."/>
            <person name="Schaefer A.M."/>
            <person name="Griffiths P.G."/>
            <person name="Ahlqvist K."/>
            <person name="Suomalainen A."/>
            <person name="Reynier P."/>
            <person name="McFarland R."/>
            <person name="Turnbull D.M."/>
            <person name="Chinnery P.F."/>
            <person name="Taylor R.W."/>
        </authorList>
    </citation>
    <scope>VARIANT DOA+ ARG-545</scope>
</reference>
<reference key="52">
    <citation type="journal article" date="2008" name="Brain">
        <title>OPA1 mutations induce mitochondrial DNA instability and optic atrophy 'plus' phenotypes.</title>
        <authorList>
            <person name="Amati-Bonneau P."/>
            <person name="Valentino M.L."/>
            <person name="Reynier P."/>
            <person name="Gallardo M.E."/>
            <person name="Bornstein B."/>
            <person name="Boissiere A."/>
            <person name="Campos Y."/>
            <person name="Rivera H."/>
            <person name="de la Aleja J.G."/>
            <person name="Carroccia R."/>
            <person name="Iommarini L."/>
            <person name="Labauge P."/>
            <person name="Figarella-Branger D."/>
            <person name="Marcorelles P."/>
            <person name="Furby A."/>
            <person name="Beauvais K."/>
            <person name="Letournel F."/>
            <person name="Liguori R."/>
            <person name="La Morgia C."/>
            <person name="Montagna P."/>
            <person name="Liguori M."/>
            <person name="Zanna C."/>
            <person name="Rugolo M."/>
            <person name="Cossarizza A."/>
            <person name="Wissinger B."/>
            <person name="Verny C."/>
            <person name="Schwarzenbacher R."/>
            <person name="Martin M.A."/>
            <person name="Arenas J."/>
            <person name="Ayuso C."/>
            <person name="Garesse R."/>
            <person name="Lenaers G."/>
            <person name="Bonneau D."/>
            <person name="Carelli V."/>
        </authorList>
    </citation>
    <scope>VARIANTS DOA+ THR-357; VAL-439; HIS-445; ARG-545 AND ASP-910</scope>
    <scope>FUNCTION</scope>
</reference>
<reference key="53">
    <citation type="journal article" date="2008" name="J. Neurol.">
        <title>A phenotypic variation of dominant optic atrophy and deafness (ADOAD) due to a novel OPA1 mutation.</title>
        <authorList>
            <person name="Liguori M."/>
            <person name="La Russa A."/>
            <person name="Manna I."/>
            <person name="Andreoli V."/>
            <person name="Caracciolo M."/>
            <person name="Spadafora P."/>
            <person name="Cittadella R."/>
            <person name="Quattrone A."/>
        </authorList>
    </citation>
    <scope>VARIANT OPA1 VAL-439</scope>
</reference>
<reference key="54">
    <citation type="journal article" date="2009" name="Hum. Mutat.">
        <title>Molecular screening of 980 cases of suspected hereditary optic neuropathy with a report on 77 novel OPA1 mutations.</title>
        <authorList>
            <person name="Ferre M."/>
            <person name="Bonneau D."/>
            <person name="Milea D."/>
            <person name="Chevrollier A."/>
            <person name="Verny C."/>
            <person name="Dollfus H."/>
            <person name="Ayuso C."/>
            <person name="Defoort S."/>
            <person name="Vignal C."/>
            <person name="Zanlonghi X."/>
            <person name="Charlin J.-F."/>
            <person name="Kaplan J."/>
            <person name="Odent S."/>
            <person name="Hamel C.P."/>
            <person name="Procaccio V."/>
            <person name="Reynier P."/>
            <person name="Amati-Bonneau P."/>
        </authorList>
    </citation>
    <scope>VARIANTS OPA1 MET-95; CYS-102; 293-VAL-VAL-294 DEL; ARG-310; THR-357; MET-382; PRO-396; 429-PRO-ASN-430 DEL; ASP-430; ARG-449; PHE-ILE-PHE-463 INS; LYS-487; ARG-545; TYR-551; GLN-590; PRO-593; LEU-646; ASP-768; TRP-781; TYR-823; LEU-882; PRO-887; CYS-932 AND PRO-949</scope>
</reference>
<reference key="55">
    <citation type="journal article" date="2009" name="Mol. Vis.">
        <title>Acute and late-onset optic atrophy due to a novel OPA1 mutation leading to a mitochondrial coupling defect.</title>
        <authorList>
            <person name="Nochez Y."/>
            <person name="Arsene S."/>
            <person name="Gueguen N."/>
            <person name="Chevrollier A."/>
            <person name="Ferre M."/>
            <person name="Guillet V."/>
            <person name="Desquiret V."/>
            <person name="Toutain A."/>
            <person name="Bonneau D."/>
            <person name="Procaccio V."/>
            <person name="Amati-Bonneau P."/>
            <person name="Pisella P.-J."/>
            <person name="Reynier P."/>
        </authorList>
    </citation>
    <scope>VARIANT OPA1 CYS-932</scope>
</reference>
<reference key="56">
    <citation type="journal article" date="2010" name="Ophthalmology">
        <title>Novel mutations of the OPA1 gene in Chinese dominant optic atrophy.</title>
        <authorList>
            <person name="Yen M.Y."/>
            <person name="Wang A.G."/>
            <person name="Lin Y.C."/>
            <person name="Fann M.J."/>
            <person name="Hsiao K.J."/>
        </authorList>
    </citation>
    <scope>VARIANTS OPA1 LEU-593 DEL AND PRO-949</scope>
    <scope>VARIANT GLY-502</scope>
</reference>
<reference key="57">
    <citation type="journal article" date="2012" name="Biochem. Biophys. Res. Commun.">
        <title>A novel OPA1 mutation in a Chinese family with autosomal dominant optic atrophy.</title>
        <authorList>
            <person name="Zhang J."/>
            <person name="Yuan Y."/>
            <person name="Lin B."/>
            <person name="Feng H."/>
            <person name="Li Y."/>
            <person name="Dai X."/>
            <person name="Zhou H."/>
            <person name="Dong X."/>
            <person name="Liu X.L."/>
            <person name="Guan M.X."/>
        </authorList>
    </citation>
    <scope>VARIANT OPA1 ALA-400</scope>
</reference>
<reference key="58">
    <citation type="journal article" date="2012" name="BMC Med. Genet.">
        <title>Dominant optic atrophy in Denmark - report of 15 novel mutations in OPA1, using a strategy with a detection rate of 90%.</title>
        <authorList>
            <person name="Almind G.J."/>
            <person name="Ek J."/>
            <person name="Rosenberg T."/>
            <person name="Eiberg H."/>
            <person name="Larsen M."/>
            <person name="Lucamp L."/>
            <person name="Brondum-Nielsen K."/>
            <person name="Gronskov K."/>
        </authorList>
    </citation>
    <scope>VARIANTS OPA1 GLU-459 AND VAL-910 DEL</scope>
</reference>
<reference key="59">
    <citation type="journal article" date="2013" name="Acta Ophthalmol.">
        <title>Novel OPA1 missense mutation in a family with optic atrophy and severe widespread neurological disorder.</title>
        <authorList>
            <person name="Liskova P."/>
            <person name="Ulmanova O."/>
            <person name="Tesina P."/>
            <person name="Melsova H."/>
            <person name="Diblik P."/>
            <person name="Hansikova H."/>
            <person name="Tesarova M."/>
            <person name="Votruba M."/>
        </authorList>
    </citation>
    <scope>VARIANT DOA+ PRO-449</scope>
</reference>
<reference key="60">
    <citation type="journal article" date="2013" name="Mol. Vis.">
        <title>Mutation survey of the optic atrophy 1 gene in 193 Chinese families with suspected hereditary optic neuropathy.</title>
        <authorList>
            <person name="Chen Y."/>
            <person name="Jia X."/>
            <person name="Wang P."/>
            <person name="Xiao X."/>
            <person name="Li S."/>
            <person name="Guo X."/>
            <person name="Zhang Q."/>
        </authorList>
    </citation>
    <scope>VARIANTS OPA1 SER-330 AND ILE-377</scope>
</reference>